<proteinExistence type="evidence at protein level"/>
<feature type="signal peptide" evidence="8 23">
    <location>
        <begin position="1"/>
        <end position="21"/>
    </location>
</feature>
<feature type="chain" id="PRO_0000021859" description="Neuropilin-1">
    <location>
        <begin position="22"/>
        <end position="923"/>
    </location>
</feature>
<feature type="topological domain" description="Extracellular" evidence="2">
    <location>
        <begin position="22"/>
        <end position="856"/>
    </location>
</feature>
<feature type="transmembrane region" description="Helical" evidence="2">
    <location>
        <begin position="857"/>
        <end position="879"/>
    </location>
</feature>
<feature type="topological domain" description="Cytoplasmic" evidence="2">
    <location>
        <begin position="880"/>
        <end position="923"/>
    </location>
</feature>
<feature type="domain" description="CUB 1" evidence="3">
    <location>
        <begin position="27"/>
        <end position="141"/>
    </location>
</feature>
<feature type="domain" description="CUB 2" evidence="3">
    <location>
        <begin position="147"/>
        <end position="265"/>
    </location>
</feature>
<feature type="domain" description="F5/8 type C 1" evidence="4">
    <location>
        <begin position="275"/>
        <end position="424"/>
    </location>
</feature>
<feature type="domain" description="F5/8 type C 2" evidence="4">
    <location>
        <begin position="431"/>
        <end position="583"/>
    </location>
</feature>
<feature type="domain" description="MAM" evidence="5">
    <location>
        <begin position="645"/>
        <end position="811"/>
    </location>
</feature>
<feature type="region of interest" description="Disordered" evidence="6">
    <location>
        <begin position="820"/>
        <end position="845"/>
    </location>
</feature>
<feature type="binding site" evidence="14 34">
    <location>
        <position position="195"/>
    </location>
    <ligand>
        <name>Ca(2+)</name>
        <dbReference type="ChEBI" id="CHEBI:29108"/>
    </ligand>
</feature>
<feature type="binding site" evidence="14 34">
    <location>
        <position position="209"/>
    </location>
    <ligand>
        <name>Ca(2+)</name>
        <dbReference type="ChEBI" id="CHEBI:29108"/>
    </ligand>
</feature>
<feature type="binding site" evidence="14 34">
    <location>
        <position position="250"/>
    </location>
    <ligand>
        <name>Ca(2+)</name>
        <dbReference type="ChEBI" id="CHEBI:29108"/>
    </ligand>
</feature>
<feature type="modified residue" description="Phosphoserine" evidence="1">
    <location>
        <position position="894"/>
    </location>
</feature>
<feature type="glycosylation site" description="N-linked (GlcNAc...) asparagine" evidence="11 14 15">
    <location>
        <position position="150"/>
    </location>
</feature>
<feature type="glycosylation site" description="N-linked (GlcNAc...) asparagine" evidence="14 15">
    <location>
        <position position="261"/>
    </location>
</feature>
<feature type="glycosylation site" description="N-linked (GlcNAc...) asparagine" evidence="2">
    <location>
        <position position="300"/>
    </location>
</feature>
<feature type="glycosylation site" description="N-linked (GlcNAc...) asparagine" evidence="15">
    <location>
        <position position="522"/>
    </location>
</feature>
<feature type="glycosylation site" description="O-linked (Xyl...) (chondroitin sulfate) serine; alternate" evidence="12">
    <location>
        <position position="612"/>
    </location>
</feature>
<feature type="glycosylation site" description="O-linked (Xyl...) (heparan sulfate) serine; alternate" evidence="12">
    <location>
        <position position="612"/>
    </location>
</feature>
<feature type="glycosylation site" description="O-linked (Xyl...) (chondroitin sulfate) serine" evidence="21">
    <location>
        <position position="829"/>
    </location>
</feature>
<feature type="glycosylation site" description="N-linked (GlcNAc...) asparagine" evidence="2">
    <location>
        <position position="842"/>
    </location>
</feature>
<feature type="disulfide bond" evidence="31">
    <location>
        <begin position="27"/>
        <end position="54"/>
    </location>
</feature>
<feature type="disulfide bond" evidence="31">
    <location>
        <begin position="82"/>
        <end position="104"/>
    </location>
</feature>
<feature type="disulfide bond" evidence="14">
    <location>
        <begin position="147"/>
        <end position="173"/>
    </location>
</feature>
<feature type="disulfide bond" evidence="14">
    <location>
        <begin position="206"/>
        <end position="228"/>
    </location>
</feature>
<feature type="disulfide bond" evidence="14">
    <location>
        <begin position="275"/>
        <end position="424"/>
    </location>
</feature>
<feature type="disulfide bond" evidence="14">
    <location>
        <begin position="431"/>
        <end position="583"/>
    </location>
</feature>
<feature type="splice variant" id="VSP_053498" description="In isoform 3." evidence="28">
    <location>
        <begin position="587"/>
        <end position="621"/>
    </location>
</feature>
<feature type="splice variant" id="VSP_004339" description="In isoform 2 and isoform 3." evidence="27 28 29">
    <original>EFP</original>
    <variation>GIK</variation>
    <location>
        <begin position="642"/>
        <end position="644"/>
    </location>
</feature>
<feature type="splice variant" id="VSP_004340" description="In isoform 2 and isoform 3." evidence="27 28 29">
    <location>
        <begin position="645"/>
        <end position="923"/>
    </location>
</feature>
<feature type="sequence variant" id="VAR_046536" description="In dbSNP:rs7079053." evidence="8 10 13 22 23 24 25 26">
    <original>V</original>
    <variation>A</variation>
    <location>
        <position position="179"/>
    </location>
</feature>
<feature type="sequence variant" id="VAR_046537" description="In dbSNP:rs2228637.">
    <original>F</original>
    <variation>L</variation>
    <location>
        <position position="561"/>
    </location>
</feature>
<feature type="sequence variant" id="VAR_056957" description="In dbSNP:rs2228638.">
    <original>V</original>
    <variation>I</variation>
    <location>
        <position position="733"/>
    </location>
</feature>
<feature type="sequence conflict" description="In Ref. 1; AAC51759." evidence="30" ref="1">
    <original>K</original>
    <variation>E</variation>
    <location>
        <position position="26"/>
    </location>
</feature>
<feature type="sequence conflict" description="In Ref. 5; CAD91133." evidence="30" ref="5">
    <original>D</original>
    <variation>G</variation>
    <location>
        <position position="219"/>
    </location>
</feature>
<feature type="sequence conflict" description="In Ref. 2; AAC12921." evidence="30" ref="2">
    <original>D</original>
    <variation>H</variation>
    <location>
        <position position="749"/>
    </location>
</feature>
<feature type="sequence conflict" description="In Ref. 1; AAC51759." evidence="30" ref="1">
    <original>D</original>
    <variation>E</variation>
    <location>
        <position position="855"/>
    </location>
</feature>
<feature type="strand" evidence="38">
    <location>
        <begin position="149"/>
        <end position="151"/>
    </location>
</feature>
<feature type="strand" evidence="38">
    <location>
        <begin position="153"/>
        <end position="159"/>
    </location>
</feature>
<feature type="turn" evidence="38">
    <location>
        <begin position="161"/>
        <end position="164"/>
    </location>
</feature>
<feature type="strand" evidence="38">
    <location>
        <begin position="172"/>
        <end position="178"/>
    </location>
</feature>
<feature type="helix" evidence="38">
    <location>
        <begin position="180"/>
        <end position="182"/>
    </location>
</feature>
<feature type="strand" evidence="38">
    <location>
        <begin position="185"/>
        <end position="193"/>
    </location>
</feature>
<feature type="strand" evidence="38">
    <location>
        <begin position="208"/>
        <end position="217"/>
    </location>
</feature>
<feature type="turn" evidence="38">
    <location>
        <begin position="218"/>
        <end position="220"/>
    </location>
</feature>
<feature type="strand" evidence="38">
    <location>
        <begin position="223"/>
        <end position="227"/>
    </location>
</feature>
<feature type="strand" evidence="38">
    <location>
        <begin position="235"/>
        <end position="238"/>
    </location>
</feature>
<feature type="strand" evidence="38">
    <location>
        <begin position="240"/>
        <end position="248"/>
    </location>
</feature>
<feature type="strand" evidence="38">
    <location>
        <begin position="257"/>
        <end position="264"/>
    </location>
</feature>
<feature type="turn" evidence="39">
    <location>
        <begin position="273"/>
        <end position="275"/>
    </location>
</feature>
<feature type="turn" evidence="43">
    <location>
        <begin position="281"/>
        <end position="283"/>
    </location>
</feature>
<feature type="strand" evidence="41">
    <location>
        <begin position="284"/>
        <end position="286"/>
    </location>
</feature>
<feature type="helix" evidence="43">
    <location>
        <begin position="288"/>
        <end position="290"/>
    </location>
</feature>
<feature type="strand" evidence="43">
    <location>
        <begin position="291"/>
        <end position="294"/>
    </location>
</feature>
<feature type="helix" evidence="43">
    <location>
        <begin position="299"/>
        <end position="301"/>
    </location>
</feature>
<feature type="helix" evidence="43">
    <location>
        <begin position="303"/>
        <end position="306"/>
    </location>
</feature>
<feature type="strand" evidence="44">
    <location>
        <begin position="318"/>
        <end position="321"/>
    </location>
</feature>
<feature type="strand" evidence="43">
    <location>
        <begin position="326"/>
        <end position="342"/>
    </location>
</feature>
<feature type="turn" evidence="43">
    <location>
        <begin position="347"/>
        <end position="349"/>
    </location>
</feature>
<feature type="strand" evidence="43">
    <location>
        <begin position="352"/>
        <end position="368"/>
    </location>
</feature>
<feature type="strand" evidence="36">
    <location>
        <begin position="369"/>
        <end position="371"/>
    </location>
</feature>
<feature type="strand" evidence="40">
    <location>
        <begin position="373"/>
        <end position="378"/>
    </location>
</feature>
<feature type="strand" evidence="43">
    <location>
        <begin position="385"/>
        <end position="389"/>
    </location>
</feature>
<feature type="strand" evidence="43">
    <location>
        <begin position="391"/>
        <end position="414"/>
    </location>
</feature>
<feature type="strand" evidence="43">
    <location>
        <begin position="417"/>
        <end position="424"/>
    </location>
</feature>
<feature type="helix" evidence="37">
    <location>
        <begin position="426"/>
        <end position="428"/>
    </location>
</feature>
<feature type="turn" evidence="37">
    <location>
        <begin position="437"/>
        <end position="439"/>
    </location>
</feature>
<feature type="helix" evidence="37">
    <location>
        <begin position="444"/>
        <end position="446"/>
    </location>
</feature>
<feature type="strand" evidence="37">
    <location>
        <begin position="447"/>
        <end position="449"/>
    </location>
</feature>
<feature type="turn" evidence="37">
    <location>
        <begin position="450"/>
        <end position="453"/>
    </location>
</feature>
<feature type="helix" evidence="37">
    <location>
        <begin position="459"/>
        <end position="462"/>
    </location>
</feature>
<feature type="turn" evidence="38">
    <location>
        <begin position="464"/>
        <end position="466"/>
    </location>
</feature>
<feature type="strand" evidence="38">
    <location>
        <begin position="471"/>
        <end position="473"/>
    </location>
</feature>
<feature type="strand" evidence="37">
    <location>
        <begin position="485"/>
        <end position="502"/>
    </location>
</feature>
<feature type="turn" evidence="38">
    <location>
        <begin position="506"/>
        <end position="508"/>
    </location>
</feature>
<feature type="strand" evidence="37">
    <location>
        <begin position="515"/>
        <end position="525"/>
    </location>
</feature>
<feature type="strand" evidence="37">
    <location>
        <begin position="534"/>
        <end position="537"/>
    </location>
</feature>
<feature type="strand" evidence="37">
    <location>
        <begin position="544"/>
        <end position="547"/>
    </location>
</feature>
<feature type="strand" evidence="37">
    <location>
        <begin position="550"/>
        <end position="566"/>
    </location>
</feature>
<feature type="strand" evidence="37">
    <location>
        <begin position="570"/>
        <end position="572"/>
    </location>
</feature>
<feature type="strand" evidence="37">
    <location>
        <begin position="576"/>
        <end position="584"/>
    </location>
</feature>
<feature type="helix" evidence="42">
    <location>
        <begin position="643"/>
        <end position="645"/>
    </location>
</feature>
<feature type="turn" evidence="42">
    <location>
        <begin position="646"/>
        <end position="648"/>
    </location>
</feature>
<feature type="strand" evidence="42">
    <location>
        <begin position="667"/>
        <end position="671"/>
    </location>
</feature>
<feature type="strand" evidence="42">
    <location>
        <begin position="674"/>
        <end position="677"/>
    </location>
</feature>
<feature type="strand" evidence="42">
    <location>
        <begin position="680"/>
        <end position="682"/>
    </location>
</feature>
<feature type="turn" evidence="42">
    <location>
        <begin position="686"/>
        <end position="689"/>
    </location>
</feature>
<feature type="strand" evidence="42">
    <location>
        <begin position="690"/>
        <end position="696"/>
    </location>
</feature>
<feature type="helix" evidence="42">
    <location>
        <begin position="699"/>
        <end position="701"/>
    </location>
</feature>
<feature type="strand" evidence="42">
    <location>
        <begin position="705"/>
        <end position="713"/>
    </location>
</feature>
<feature type="strand" evidence="42">
    <location>
        <begin position="720"/>
        <end position="728"/>
    </location>
</feature>
<feature type="strand" evidence="42">
    <location>
        <begin position="733"/>
        <end position="742"/>
    </location>
</feature>
<feature type="strand" evidence="42">
    <location>
        <begin position="744"/>
        <end position="746"/>
    </location>
</feature>
<feature type="strand" evidence="42">
    <location>
        <begin position="749"/>
        <end position="757"/>
    </location>
</feature>
<feature type="strand" evidence="42">
    <location>
        <begin position="761"/>
        <end position="770"/>
    </location>
</feature>
<feature type="strand" evidence="42">
    <location>
        <begin position="777"/>
        <end position="785"/>
    </location>
</feature>
<feature type="strand" evidence="42">
    <location>
        <begin position="792"/>
        <end position="800"/>
    </location>
</feature>
<feature type="turn" evidence="42">
    <location>
        <begin position="806"/>
        <end position="808"/>
    </location>
</feature>
<feature type="strand" evidence="42">
    <location>
        <begin position="809"/>
        <end position="811"/>
    </location>
</feature>
<sequence>MERGLPLLCAVLALVLAPAGAFRNDKCGDTIKIESPGYLTSPGYPHSYHPSEKCEWLIQAPDPYQRIMINFNPHFDLEDRDCKYDYVEVFDGENENGHFRGKFCGKIAPPPVVSSGPFLFIKFVSDYETHGAGFSIRYEIFKRGPECSQNYTTPSGVIKSPGFPEKYPNSLECTYIVFVPKMSEIILEFESFDLEPDSNPPGGMFCRYDRLEIWDGFPDVGPHIGRYCGQKTPGRIRSSSGILSMVFYTDSAIAKEGFSANYSVLQSSVSEDFKCMEALGMESGEIHSDQITASSQYSTNWSAERSRLNYPENGWTPGEDSYREWIQVDLGLLRFVTAVGTQGAISKETKKKYYVKTYKIDVSSNGEDWITIKEGNKPVLFQGNTNPTDVVVAVFPKPLITRFVRIKPATWETGISMRFEVYGCKITDYPCSGMLGMVSGLISDSQITSSNQGDRNWMPENIRLVTSRSGWALPPAPHSYINEWLQIDLGEEKIVRGIIIQGGKHRENKVFMRKFKIGYSNNGSDWKMIMDDSKRKAKSFEGNNNYDTPELRTFPALSTRFIRIYPERATHGGLGLRMELLGCEVEAPTAGPTTPNGNLVDECDDDQANCHSGTGDDFQLTGGTTVLATEKPTVIDSTIQSEFPTYGFNCEFGWGSHKTFCHWEHDNHVQLKWSVLTSKTGPIQDHTGDGNFIYSQADENQKGKVARLVSPVVYSQNSAHCMTFWYHMSGSHVGTLRVKLRYQKPEEYDQLVWMAIGHQGDHWKEGRVLLHKSLKLYQVIFEGEIGKGNLGGIAVDDISINNHISQEDCAKPADLDKKNPEIKIDETGSTPGYEGEGEGDKNISRKPGNVLKTLDPILITIIAMSALGVLLGAVCGVVLYCACWHNGMSERNLSALENYNFELVDGVKLKKDKLNTQSTYSEA</sequence>
<accession>O14786</accession>
<accession>B0LPG9</accession>
<accession>O60461</accession>
<accession>Q5T7F1</accession>
<accession>Q5T7F2</accession>
<accession>Q5T7F3</accession>
<accession>Q86T59</accession>
<accession>Q96I90</accession>
<accession>Q96IH5</accession>
<protein>
    <recommendedName>
        <fullName evidence="30">Neuropilin-1</fullName>
    </recommendedName>
    <alternativeName>
        <fullName>Vascular endothelial cell growth factor 165 receptor</fullName>
    </alternativeName>
    <cdAntigenName>CD304</cdAntigenName>
</protein>
<reference key="1">
    <citation type="journal article" date="1997" name="Cell">
        <title>Neuropilin is a receptor for the axonal chemorepellent semaphorin III.</title>
        <authorList>
            <person name="He Z."/>
            <person name="Tessier-Lavigne M."/>
        </authorList>
    </citation>
    <scope>NUCLEOTIDE SEQUENCE [MRNA] (ISOFORM 1)</scope>
    <scope>FUNCTION</scope>
    <scope>VARIANT ALA-179</scope>
</reference>
<reference key="2">
    <citation type="journal article" date="1998" name="Cell">
        <title>Neuropilin-1 is expressed by endothelial and tumor cells as an isoform-specific receptor for vascular endothelial growth factor.</title>
        <authorList>
            <person name="Soker S."/>
            <person name="Takashima S."/>
            <person name="Miao H.-Q."/>
            <person name="Neufeld G."/>
            <person name="Klagsbrun M."/>
        </authorList>
    </citation>
    <scope>NUCLEOTIDE SEQUENCE [MRNA] (ISOFORM 1)</scope>
    <scope>FUNCTION</scope>
    <scope>PROTEIN SEQUENCE OF 22-39</scope>
    <scope>VARIANT ALA-179</scope>
    <scope>TISSUE SPECIFICITY</scope>
    <source>
        <tissue>Mammary gland</tissue>
    </source>
</reference>
<reference key="3">
    <citation type="journal article" date="2000" name="Proc. Natl. Acad. Sci. U.S.A.">
        <title>Identification of a natural soluble neuropilin-1 that binds vascular endothelial growth factor: in vivo expression and antitumor activity.</title>
        <authorList>
            <person name="Gagnon M.L."/>
            <person name="Bielenberg D.R."/>
            <person name="Gechtman Z."/>
            <person name="Miao H.-Q."/>
            <person name="Takashima S."/>
            <person name="Soker S."/>
            <person name="Klagsbrun M."/>
        </authorList>
    </citation>
    <scope>NUCLEOTIDE SEQUENCE [MRNA] (ISOFORM 2)</scope>
    <scope>FUNCTION</scope>
    <scope>PROTEIN SEQUENCE OF 22-31</scope>
    <scope>VARIANT ALA-179</scope>
    <scope>TISSUE SPECIFICITY</scope>
    <scope>SUBCELLULAR LOCATION (ISOFORM 2)</scope>
    <source>
        <tissue>Prostatic adenocarcinoma</tissue>
    </source>
</reference>
<reference key="4">
    <citation type="submission" date="2003-05" db="EMBL/GenBank/DDBJ databases">
        <title>Cloning of human full-length CDSs in BD Creator(TM) system donor vector.</title>
        <authorList>
            <person name="Kalnine N."/>
            <person name="Chen X."/>
            <person name="Rolfs A."/>
            <person name="Halleck A."/>
            <person name="Hines L."/>
            <person name="Eisenstein S."/>
            <person name="Koundinya M."/>
            <person name="Raphael J."/>
            <person name="Moreira D."/>
            <person name="Kelley T."/>
            <person name="LaBaer J."/>
            <person name="Lin Y."/>
            <person name="Phelan M."/>
            <person name="Farmer A."/>
        </authorList>
    </citation>
    <scope>NUCLEOTIDE SEQUENCE [LARGE SCALE MRNA] (ISOFORM 2)</scope>
    <scope>VARIANT ALA-179</scope>
</reference>
<reference key="5">
    <citation type="journal article" date="2007" name="BMC Genomics">
        <title>The full-ORF clone resource of the German cDNA consortium.</title>
        <authorList>
            <person name="Bechtel S."/>
            <person name="Rosenfelder H."/>
            <person name="Duda A."/>
            <person name="Schmidt C.P."/>
            <person name="Ernst U."/>
            <person name="Wellenreuther R."/>
            <person name="Mehrle A."/>
            <person name="Schuster C."/>
            <person name="Bahr A."/>
            <person name="Bloecker H."/>
            <person name="Heubner D."/>
            <person name="Hoerlein A."/>
            <person name="Michel G."/>
            <person name="Wedler H."/>
            <person name="Koehrer K."/>
            <person name="Ottenwaelder B."/>
            <person name="Poustka A."/>
            <person name="Wiemann S."/>
            <person name="Schupp I."/>
        </authorList>
    </citation>
    <scope>NUCLEOTIDE SEQUENCE [LARGE SCALE MRNA] (ISOFORM 1)</scope>
    <scope>VARIANT ALA-179</scope>
    <source>
        <tissue>Skeletal muscle</tissue>
    </source>
</reference>
<reference key="6">
    <citation type="submission" date="2007-12" db="EMBL/GenBank/DDBJ databases">
        <authorList>
            <consortium name="SeattleSNPs variation discovery resource"/>
        </authorList>
    </citation>
    <scope>NUCLEOTIDE SEQUENCE [GENOMIC DNA]</scope>
    <scope>VARIANT ALA-179</scope>
</reference>
<reference key="7">
    <citation type="journal article" date="2004" name="Nature">
        <title>The DNA sequence and comparative analysis of human chromosome 10.</title>
        <authorList>
            <person name="Deloukas P."/>
            <person name="Earthrowl M.E."/>
            <person name="Grafham D.V."/>
            <person name="Rubenfield M."/>
            <person name="French L."/>
            <person name="Steward C.A."/>
            <person name="Sims S.K."/>
            <person name="Jones M.C."/>
            <person name="Searle S."/>
            <person name="Scott C."/>
            <person name="Howe K."/>
            <person name="Hunt S.E."/>
            <person name="Andrews T.D."/>
            <person name="Gilbert J.G.R."/>
            <person name="Swarbreck D."/>
            <person name="Ashurst J.L."/>
            <person name="Taylor A."/>
            <person name="Battles J."/>
            <person name="Bird C.P."/>
            <person name="Ainscough R."/>
            <person name="Almeida J.P."/>
            <person name="Ashwell R.I.S."/>
            <person name="Ambrose K.D."/>
            <person name="Babbage A.K."/>
            <person name="Bagguley C.L."/>
            <person name="Bailey J."/>
            <person name="Banerjee R."/>
            <person name="Bates K."/>
            <person name="Beasley H."/>
            <person name="Bray-Allen S."/>
            <person name="Brown A.J."/>
            <person name="Brown J.Y."/>
            <person name="Burford D.C."/>
            <person name="Burrill W."/>
            <person name="Burton J."/>
            <person name="Cahill P."/>
            <person name="Camire D."/>
            <person name="Carter N.P."/>
            <person name="Chapman J.C."/>
            <person name="Clark S.Y."/>
            <person name="Clarke G."/>
            <person name="Clee C.M."/>
            <person name="Clegg S."/>
            <person name="Corby N."/>
            <person name="Coulson A."/>
            <person name="Dhami P."/>
            <person name="Dutta I."/>
            <person name="Dunn M."/>
            <person name="Faulkner L."/>
            <person name="Frankish A."/>
            <person name="Frankland J.A."/>
            <person name="Garner P."/>
            <person name="Garnett J."/>
            <person name="Gribble S."/>
            <person name="Griffiths C."/>
            <person name="Grocock R."/>
            <person name="Gustafson E."/>
            <person name="Hammond S."/>
            <person name="Harley J.L."/>
            <person name="Hart E."/>
            <person name="Heath P.D."/>
            <person name="Ho T.P."/>
            <person name="Hopkins B."/>
            <person name="Horne J."/>
            <person name="Howden P.J."/>
            <person name="Huckle E."/>
            <person name="Hynds C."/>
            <person name="Johnson C."/>
            <person name="Johnson D."/>
            <person name="Kana A."/>
            <person name="Kay M."/>
            <person name="Kimberley A.M."/>
            <person name="Kershaw J.K."/>
            <person name="Kokkinaki M."/>
            <person name="Laird G.K."/>
            <person name="Lawlor S."/>
            <person name="Lee H.M."/>
            <person name="Leongamornlert D.A."/>
            <person name="Laird G."/>
            <person name="Lloyd C."/>
            <person name="Lloyd D.M."/>
            <person name="Loveland J."/>
            <person name="Lovell J."/>
            <person name="McLaren S."/>
            <person name="McLay K.E."/>
            <person name="McMurray A."/>
            <person name="Mashreghi-Mohammadi M."/>
            <person name="Matthews L."/>
            <person name="Milne S."/>
            <person name="Nickerson T."/>
            <person name="Nguyen M."/>
            <person name="Overton-Larty E."/>
            <person name="Palmer S.A."/>
            <person name="Pearce A.V."/>
            <person name="Peck A.I."/>
            <person name="Pelan S."/>
            <person name="Phillimore B."/>
            <person name="Porter K."/>
            <person name="Rice C.M."/>
            <person name="Rogosin A."/>
            <person name="Ross M.T."/>
            <person name="Sarafidou T."/>
            <person name="Sehra H.K."/>
            <person name="Shownkeen R."/>
            <person name="Skuce C.D."/>
            <person name="Smith M."/>
            <person name="Standring L."/>
            <person name="Sycamore N."/>
            <person name="Tester J."/>
            <person name="Thorpe A."/>
            <person name="Torcasso W."/>
            <person name="Tracey A."/>
            <person name="Tromans A."/>
            <person name="Tsolas J."/>
            <person name="Wall M."/>
            <person name="Walsh J."/>
            <person name="Wang H."/>
            <person name="Weinstock K."/>
            <person name="West A.P."/>
            <person name="Willey D.L."/>
            <person name="Whitehead S.L."/>
            <person name="Wilming L."/>
            <person name="Wray P.W."/>
            <person name="Young L."/>
            <person name="Chen Y."/>
            <person name="Lovering R.C."/>
            <person name="Moschonas N.K."/>
            <person name="Siebert R."/>
            <person name="Fechtel K."/>
            <person name="Bentley D."/>
            <person name="Durbin R.M."/>
            <person name="Hubbard T."/>
            <person name="Doucette-Stamm L."/>
            <person name="Beck S."/>
            <person name="Smith D.R."/>
            <person name="Rogers J."/>
        </authorList>
    </citation>
    <scope>NUCLEOTIDE SEQUENCE [LARGE SCALE GENOMIC DNA]</scope>
</reference>
<reference key="8">
    <citation type="submission" date="2005-09" db="EMBL/GenBank/DDBJ databases">
        <authorList>
            <person name="Mural R.J."/>
            <person name="Istrail S."/>
            <person name="Sutton G.G."/>
            <person name="Florea L."/>
            <person name="Halpern A.L."/>
            <person name="Mobarry C.M."/>
            <person name="Lippert R."/>
            <person name="Walenz B."/>
            <person name="Shatkay H."/>
            <person name="Dew I."/>
            <person name="Miller J.R."/>
            <person name="Flanigan M.J."/>
            <person name="Edwards N.J."/>
            <person name="Bolanos R."/>
            <person name="Fasulo D."/>
            <person name="Halldorsson B.V."/>
            <person name="Hannenhalli S."/>
            <person name="Turner R."/>
            <person name="Yooseph S."/>
            <person name="Lu F."/>
            <person name="Nusskern D.R."/>
            <person name="Shue B.C."/>
            <person name="Zheng X.H."/>
            <person name="Zhong F."/>
            <person name="Delcher A.L."/>
            <person name="Huson D.H."/>
            <person name="Kravitz S.A."/>
            <person name="Mouchard L."/>
            <person name="Reinert K."/>
            <person name="Remington K.A."/>
            <person name="Clark A.G."/>
            <person name="Waterman M.S."/>
            <person name="Eichler E.E."/>
            <person name="Adams M.D."/>
            <person name="Hunkapiller M.W."/>
            <person name="Myers E.W."/>
            <person name="Venter J.C."/>
        </authorList>
    </citation>
    <scope>NUCLEOTIDE SEQUENCE [LARGE SCALE GENOMIC DNA]</scope>
    <scope>VARIANT ALA-179</scope>
</reference>
<reference key="9">
    <citation type="journal article" date="2004" name="Genome Res.">
        <title>The status, quality, and expansion of the NIH full-length cDNA project: the Mammalian Gene Collection (MGC).</title>
        <authorList>
            <consortium name="The MGC Project Team"/>
        </authorList>
    </citation>
    <scope>NUCLEOTIDE SEQUENCE [LARGE SCALE MRNA] (ISOFORMS 2 AND 3)</scope>
    <scope>VARIANT ALA-179</scope>
    <source>
        <tissue>Kidney</tissue>
        <tissue>Muscle</tissue>
    </source>
</reference>
<reference key="10">
    <citation type="journal article" date="1999" name="Cell">
        <title>Plexins are a large family of receptors for transmembrane, secreted and GPI-anchored semaphorins in vertebrates.</title>
        <authorList>
            <person name="Tamagnone L."/>
            <person name="Artigiani S."/>
            <person name="Chen H."/>
            <person name="He Z."/>
            <person name="Ming G.-L."/>
            <person name="Song H.-L."/>
            <person name="Chedotal A."/>
            <person name="Winberg M.L."/>
            <person name="Goodman C.S."/>
            <person name="Poo M.-M."/>
            <person name="Tessier-Lavigne M."/>
            <person name="Comoglio P.M."/>
        </authorList>
    </citation>
    <scope>INTERACTION WITH PLXNB1</scope>
</reference>
<reference key="11">
    <citation type="journal article" date="2000" name="J. Biol. Chem.">
        <title>Neuropilin-2 is a receptor for the vascular endothelial growth factor (VEGF) forms VEGF-145 and VEGF-165.</title>
        <authorList>
            <person name="Gluzman-Poltorak Z."/>
            <person name="Cohen T."/>
            <person name="Herzog Y."/>
            <person name="Neufeld G."/>
        </authorList>
    </citation>
    <scope>FUNCTION</scope>
</reference>
<reference key="12">
    <citation type="journal article" date="2005" name="J. Proteome Res.">
        <title>Human plasma N-glycoproteome analysis by immunoaffinity subtraction, hydrazide chemistry, and mass spectrometry.</title>
        <authorList>
            <person name="Liu T."/>
            <person name="Qian W.-J."/>
            <person name="Gritsenko M.A."/>
            <person name="Camp D.G. II"/>
            <person name="Monroe M.E."/>
            <person name="Moore R.J."/>
            <person name="Smith R.D."/>
        </authorList>
    </citation>
    <scope>GLYCOSYLATION [LARGE SCALE ANALYSIS] AT ASN-150</scope>
    <source>
        <tissue>Plasma</tissue>
    </source>
</reference>
<reference key="13">
    <citation type="journal article" date="2006" name="EMBO J.">
        <title>Glycosaminoglycan modification of neuropilin-1 modulates VEGFR2 signaling.</title>
        <authorList>
            <person name="Shintani Y."/>
            <person name="Takashima S."/>
            <person name="Asano Y."/>
            <person name="Kato H."/>
            <person name="Liao Y."/>
            <person name="Yamazaki S."/>
            <person name="Tsukamoto O."/>
            <person name="Seguchi O."/>
            <person name="Yamamoto H."/>
            <person name="Fukushima T."/>
            <person name="Sugahara K."/>
            <person name="Kitakaze M."/>
            <person name="Hori M."/>
        </authorList>
    </citation>
    <scope>GLYCOSYLATION AT SER-612</scope>
</reference>
<reference key="14">
    <citation type="journal article" date="2009" name="J. Proteome Res.">
        <title>Glycoproteomics analysis of human liver tissue by combination of multiple enzyme digestion and hydrazide chemistry.</title>
        <authorList>
            <person name="Chen R."/>
            <person name="Jiang X."/>
            <person name="Sun D."/>
            <person name="Han G."/>
            <person name="Wang F."/>
            <person name="Ye M."/>
            <person name="Wang L."/>
            <person name="Zou H."/>
        </authorList>
    </citation>
    <scope>GLYCOSYLATION [LARGE SCALE ANALYSIS] AT ASN-150; ASN-261 AND ASN-522</scope>
    <source>
        <tissue>Liver</tissue>
    </source>
</reference>
<reference key="15">
    <citation type="journal article" date="2009" name="Proc. Natl. Acad. Sci. U.S.A.">
        <title>C-end rule peptides mediate neuropilin-1-dependent cell, vascular, and tissue penetration.</title>
        <authorList>
            <person name="Teesalu T."/>
            <person name="Sugahara K.N."/>
            <person name="Kotamraju V.R."/>
            <person name="Ruoslahti E."/>
        </authorList>
    </citation>
    <scope>FUNCTION</scope>
    <scope>INTERACTION WITH VEGF-A165</scope>
    <scope>DOMAIN</scope>
</reference>
<reference key="16">
    <citation type="journal article" date="2014" name="J. Proteomics">
        <title>An enzyme assisted RP-RPLC approach for in-depth analysis of human liver phosphoproteome.</title>
        <authorList>
            <person name="Bian Y."/>
            <person name="Song C."/>
            <person name="Cheng K."/>
            <person name="Dong M."/>
            <person name="Wang F."/>
            <person name="Huang J."/>
            <person name="Sun D."/>
            <person name="Wang L."/>
            <person name="Ye M."/>
            <person name="Zou H."/>
        </authorList>
    </citation>
    <scope>IDENTIFICATION BY MASS SPECTROMETRY [LARGE SCALE ANALYSIS]</scope>
    <source>
        <tissue>Liver</tissue>
    </source>
</reference>
<reference key="17">
    <citation type="journal article" date="2015" name="Nature">
        <title>CMT2D neuropathy is linked to the neomorphic binding activity of glycyl-tRNA synthetase.</title>
        <authorList>
            <person name="He W."/>
            <person name="Bai G."/>
            <person name="Zhou H."/>
            <person name="Wei N."/>
            <person name="White N.M."/>
            <person name="Lauer J."/>
            <person name="Liu H."/>
            <person name="Shi Y."/>
            <person name="Dumitru C.D."/>
            <person name="Lettieri K."/>
            <person name="Shubayev V."/>
            <person name="Jordanova A."/>
            <person name="Guergueltcheva V."/>
            <person name="Griffin P.R."/>
            <person name="Burgess R.W."/>
            <person name="Pfaff S.L."/>
            <person name="Yang X.L."/>
        </authorList>
    </citation>
    <scope>INTERACTION WITH VEGFA</scope>
</reference>
<reference key="18">
    <citation type="journal article" date="2016" name="Nature">
        <title>Corrigendum: CMT2D neuropathy is linked to the neomorphic binding activity of glycyl-tRNA synthetase.</title>
        <authorList>
            <person name="He W."/>
            <person name="Bai G."/>
            <person name="Zhou H."/>
            <person name="Wei N."/>
            <person name="White N.M."/>
            <person name="Lauer J."/>
            <person name="Liu H."/>
            <person name="Shi Y."/>
            <person name="Dan Dumitru C."/>
            <person name="Lettieri K."/>
            <person name="Shubayev V."/>
            <person name="Jordanova A."/>
            <person name="Guergueltcheva V."/>
            <person name="Griffin P.R."/>
            <person name="Burgess R.W."/>
            <person name="Pfaff S.L."/>
            <person name="Yang X.L."/>
        </authorList>
    </citation>
    <scope>ERRATUM OF PUBMED:26503042</scope>
</reference>
<reference key="19">
    <citation type="journal article" date="2019" name="IScience">
        <title>Neuropilin-1 Controls Endothelial Homeostasis by Regulating Mitochondrial Function and Iron-Dependent Oxidative Stress.</title>
        <authorList>
            <person name="Issitt T."/>
            <person name="Bosseboeuf E."/>
            <person name="De Winter N."/>
            <person name="Dufton N."/>
            <person name="Gestri G."/>
            <person name="Senatore V."/>
            <person name="Chikh A."/>
            <person name="Randi A.M."/>
            <person name="Raimondi C."/>
        </authorList>
    </citation>
    <scope>FUNCTION</scope>
    <scope>SUBUNIT</scope>
    <scope>SUBCELLULAR LOCATION</scope>
</reference>
<reference key="20">
    <citation type="journal article" date="2020" name="Mol. Med. Report.">
        <title>Neuropilin-1 as a new potential SARS-CoV-2 infection mediator implicated in the neurologic features and central nervous system involvement of COVID-19.</title>
        <authorList>
            <person name="Davies J."/>
            <person name="Randeva H.S."/>
            <person name="Chatha K."/>
            <person name="Hall M."/>
            <person name="Spandidos D.A."/>
            <person name="Karteris E."/>
            <person name="Kyrou I."/>
        </authorList>
    </citation>
    <scope>FUNCTION (MICROBIAL INFECTION)</scope>
    <scope>INTERACTION WITH SARS-COV-2 SPIKE GLYCOPROTEIN (MICROBIAL INFECTION)</scope>
</reference>
<reference key="21">
    <citation type="journal article" date="2020" name="Science">
        <title>Neuropilin-1 facilitates SARS-CoV-2 cell entry and infectivity.</title>
        <authorList>
            <person name="Cantuti-Castelvetri L."/>
            <person name="Ojha R."/>
            <person name="Pedro L.D."/>
            <person name="Djannatian M."/>
            <person name="Franz J."/>
            <person name="Kuivanen S."/>
            <person name="van der Meer F."/>
            <person name="Kallio K."/>
            <person name="Kaya T."/>
            <person name="Anastasina M."/>
            <person name="Smura T."/>
            <person name="Levanov L."/>
            <person name="Szirovicza L."/>
            <person name="Tobi A."/>
            <person name="Kallio-Kokko H."/>
            <person name="Oesterlund P."/>
            <person name="Joensuu M."/>
            <person name="Meunier F.A."/>
            <person name="Butcher S.J."/>
            <person name="Winkler M.S."/>
            <person name="Mollenhauer B."/>
            <person name="Helenius A."/>
            <person name="Gokce O."/>
            <person name="Teesalu T."/>
            <person name="Hepojoki J."/>
            <person name="Vapalahti O."/>
            <person name="Stadelmann C."/>
            <person name="Balistreri G."/>
            <person name="Simons M."/>
        </authorList>
    </citation>
    <scope>TISSUE SPECIFICITY</scope>
</reference>
<reference key="22">
    <citation type="journal article" date="2022" name="J. Proteins Proteom.">
        <title>Mass spectrometric analysis of chondroitin sulfate-linked peptides.</title>
        <authorList>
            <person name="Ramarajan M.G."/>
            <person name="Saraswat M."/>
            <person name="Budhraja R."/>
            <person name="Garapati K."/>
            <person name="Raymond K."/>
            <person name="Pandey A."/>
        </authorList>
    </citation>
    <scope>TISSUE SPECIFICITY</scope>
    <scope>GLYCOSYLATION AT SER-829</scope>
</reference>
<reference key="23">
    <citation type="journal article" date="2003" name="Structure">
        <title>Crystal structure of the human neuropilin-1 b1 domain.</title>
        <authorList>
            <person name="Lee C.C."/>
            <person name="Kreusch A."/>
            <person name="McMullan D."/>
            <person name="Ng K."/>
            <person name="Spraggon G."/>
        </authorList>
    </citation>
    <scope>X-RAY CRYSTALLOGRAPHY (1.9 ANGSTROMS) OF 273-427</scope>
</reference>
<reference key="24">
    <citation type="journal article" date="2007" name="EMBO J.">
        <title>Structural studies of neuropilin/antibody complexes provide insights into semaphorin and VEGF binding.</title>
        <authorList>
            <person name="Appleton B.A."/>
            <person name="Wu P."/>
            <person name="Maloney J."/>
            <person name="Yin J."/>
            <person name="Liang W.C."/>
            <person name="Stawicki S."/>
            <person name="Mortara K."/>
            <person name="Bowman K.K."/>
            <person name="Elliott J.M."/>
            <person name="Desmarais W."/>
            <person name="Bazan J.F."/>
            <person name="Bagri A."/>
            <person name="Tessier-Lavigne M."/>
            <person name="Koch A.W."/>
            <person name="Wu Y."/>
            <person name="Watts R.J."/>
            <person name="Wiesmann C."/>
        </authorList>
    </citation>
    <scope>X-RAY CRYSTALLOGRAPHY (2.0 ANGSTROMS) OF 141-586 ALONE AND IN COMPLEX WITH ANTIBODY</scope>
    <scope>GLYCOSYLATION AT ASN-150 AND ASN-261</scope>
    <scope>SUBUNIT</scope>
    <scope>CALCIUM-BINDING SITES</scope>
    <scope>HEPARIN-BINDING</scope>
    <scope>DISULFIDE BONDS</scope>
</reference>
<reference evidence="35" key="25">
    <citation type="journal article" date="2020" name="Science">
        <title>Neuropilin-1 is a host factor for SARS-CoV-2 infection.</title>
        <authorList>
            <person name="Daly J.L."/>
            <person name="Simonetti B."/>
            <person name="Klein K."/>
            <person name="Chen K.E."/>
            <person name="Williamson M.K."/>
            <person name="Anton-Plagaro C."/>
            <person name="Shoemark D.K."/>
            <person name="Simon-Gracia L."/>
            <person name="Bauer M."/>
            <person name="Hollandi R."/>
            <person name="Greber U.F."/>
            <person name="Horvath P."/>
            <person name="Sessions R.B."/>
            <person name="Helenius A."/>
            <person name="Hiscox J.A."/>
            <person name="Teesalu T."/>
            <person name="Matthews D.A."/>
            <person name="Davidson A.D."/>
            <person name="Collins B.M."/>
            <person name="Cullen P.J."/>
            <person name="Yamauchi Y."/>
        </authorList>
    </citation>
    <scope>X-RAY CRYSTALLOGRAPHY (2.36 ANGSTROMS) OF 273-427 IN COMPLEX WITH SARS-COV-2 SPIKE PROTEIN S1</scope>
    <scope>FUNCTION (MICROBIAL INFECTION)</scope>
    <scope>INTERACTION WITH SARS-COV-2 SPIKE PROTEIN S1 (MICROBIAL INFECTION)</scope>
</reference>
<gene>
    <name evidence="33" type="primary">NRP1</name>
    <name type="synonym">NRP</name>
    <name type="synonym">VEGF165R</name>
</gene>
<comment type="function">
    <text evidence="1 8 16 18 22 23">Cell-surface receptor involved in the development of the cardiovascular system, in angiogenesis, in the formation of certain neuronal circuits and in organogenesis outside the nervous system. Mediates the chemorepulsant activity of semaphorins (PubMed:10688880, PubMed:9288753, PubMed:9529250). Recognizes a C-end rule (CendR) motif R/KXXR/K on its ligands which causes cellular internalization and vascular leakage (PubMed:19805273). It binds to semaphorin 3A, the PLGF-2 isoform of PGF, the VEGF165 isoform of VEGFA and VEGFB (PubMed:10688880, PubMed:19805273, PubMed:9288753, PubMed:9529250). Coexpression with KDR results in increased VEGF165 binding to KDR as well as increased chemotaxis. Regulates VEGF-induced angiogenesis. Binding to VEGFA initiates a signaling pathway needed for motor neuron axon guidance and cell body migration, including for the caudal migration of facial motor neurons from rhombomere 4 to rhombomere 6 during embryonic development (By similarity). Regulates mitochondrial iron transport via interaction with ABCB8/MITOSUR (PubMed:30623799).</text>
</comment>
<comment type="function">
    <text evidence="19 20">(Microbial infection) Acts as a host factor for human coronavirus SARS-CoV-2 infection. Recognizes and binds to CendR motif RRAR on SARS-CoV-2 spike protein S1 which enhances SARS-CoV-2 infection.</text>
</comment>
<comment type="function">
    <molecule>Isoform 2</molecule>
    <text evidence="9 17">Binds VEGF-165 and may inhibit its binding to cells (PubMed:10748121, PubMed:26503042). May induce apoptosis by sequestering VEGF-165 (PubMed:10748121). May bind as well various members of the semaphorin family. Its expression has an averse effect on blood vessel number and integrity.</text>
</comment>
<comment type="subunit">
    <text evidence="1 7 14 16 17 18">Homodimer, and heterodimer with NRP2 (PubMed:17989695). Interacts with FER (By similarity). Interacts with PLXNB1 (PubMed:10520995). Interacts with VEGFA (PubMed:19805273, PubMed:26503042). Interacts with ABCB8/MITOSUR in mitochondria (PubMed:30623799).</text>
</comment>
<comment type="subunit">
    <text evidence="20">(Microbial infection) Interacts with SARS coronavirus-2/SARS-CoV-2 spike protein S1 (via the CendR motif RRAR).</text>
</comment>
<comment type="interaction">
    <interactant intactId="EBI-1187100">
        <id>O14786</id>
    </interactant>
    <interactant intactId="EBI-350432">
        <id>P21333</id>
        <label>FLNA</label>
    </interactant>
    <organismsDiffer>false</organismsDiffer>
    <experiments>2</experiments>
</comment>
<comment type="interaction">
    <interactant intactId="EBI-1187100">
        <id>O14786</id>
    </interactant>
    <interactant intactId="EBI-1382311">
        <id>P08648</id>
        <label>ITGA5</label>
    </interactant>
    <organismsDiffer>false</organismsDiffer>
    <experiments>2</experiments>
</comment>
<comment type="interaction">
    <interactant intactId="EBI-1187100">
        <id>O14786</id>
    </interactant>
    <interactant intactId="EBI-1005487">
        <id>P35968</id>
        <label>KDR</label>
    </interactant>
    <organismsDiffer>false</organismsDiffer>
    <experiments>2</experiments>
</comment>
<comment type="interaction">
    <interactant intactId="EBI-1187100">
        <id>O14786</id>
    </interactant>
    <interactant intactId="EBI-1026643">
        <id>P15692</id>
        <label>VEGFA</label>
    </interactant>
    <organismsDiffer>false</organismsDiffer>
    <experiments>4</experiments>
</comment>
<comment type="interaction">
    <interactant intactId="EBI-1187100">
        <id>O14786</id>
    </interactant>
    <interactant intactId="EBI-25474821">
        <id>P0DTC2</id>
        <label>S</label>
    </interactant>
    <organismsDiffer>true</organismsDiffer>
    <experiments>9</experiments>
</comment>
<comment type="interaction">
    <interactant intactId="EBI-6285281">
        <id>O14786-2</id>
    </interactant>
    <interactant intactId="EBI-1026691">
        <id>P15692-4</id>
        <label>VEGFA</label>
    </interactant>
    <organismsDiffer>false</organismsDiffer>
    <experiments>4</experiments>
</comment>
<comment type="subcellular location">
    <molecule>Isoform 2</molecule>
    <subcellularLocation>
        <location evidence="8">Secreted</location>
    </subcellularLocation>
</comment>
<comment type="subcellular location">
    <subcellularLocation>
        <location evidence="32">Mitochondrion membrane</location>
        <topology evidence="2">Single-pass type I membrane protein</topology>
    </subcellularLocation>
    <subcellularLocation>
        <location evidence="18">Cell membrane</location>
        <topology evidence="2">Single-pass type I membrane protein</topology>
    </subcellularLocation>
    <subcellularLocation>
        <location evidence="18">Cytoplasm</location>
    </subcellularLocation>
</comment>
<comment type="alternative products">
    <event type="alternative splicing"/>
    <isoform>
        <id>O14786-1</id>
        <name>1</name>
        <name>Membrane-bound</name>
        <sequence type="displayed"/>
    </isoform>
    <isoform>
        <id>O14786-2</id>
        <name>2</name>
        <name evidence="27">Soluble</name>
        <name>SNRP1</name>
        <sequence type="described" ref="VSP_004339 VSP_004340"/>
    </isoform>
    <isoform>
        <id>O14786-3</id>
        <name>3</name>
        <sequence type="described" ref="VSP_053498 VSP_004339 VSP_004340"/>
    </isoform>
</comment>
<comment type="tissue specificity">
    <molecule>Isoform 1</molecule>
    <text evidence="8 19 21 23">The expression of isoforms 1 and 2 does not seem to overlap. Expressed in olfactory epithelium (at protein level) (PubMed:33082293). Expressed in fibroblasts (at protein level) (PubMed:36213313). Expressed by the blood vessels of different tissues. In the developing embryo it is found predominantly in the nervous system. In adult tissues, it is highly expressed in heart and placenta; moderately in lung, liver, skeletal muscle, kidney and pancreas; and low in adult brain (PubMed:10688880, PubMed:9529250). Expressed in the central nervous system, including olfactory related regions such as the olfactory tubercles and paraolfactory gyri (PubMed:33082293).</text>
</comment>
<comment type="tissue specificity">
    <molecule>Isoform 2</molecule>
    <text evidence="8">The expression of isoforms 1 and 2 does not seem to overlap. Found in liver hepatocytes, kidney distal and proximal tubules.</text>
</comment>
<comment type="domain">
    <text evidence="16 20">The tandem CUB domains mediate binding to semaphorin, while the tandem F5/8 domains are responsible for heparin and VEGF binding. F5/8 domains mediate the recognition and binding to R/KXXR/K CendR motifs (PubMed:19805273, PubMed:33082294).</text>
</comment>
<comment type="similarity">
    <text evidence="30">Belongs to the neuropilin family.</text>
</comment>
<dbReference type="EMBL" id="AF018956">
    <property type="protein sequence ID" value="AAC51759.1"/>
    <property type="molecule type" value="mRNA"/>
</dbReference>
<dbReference type="EMBL" id="AF016050">
    <property type="protein sequence ID" value="AAC12921.1"/>
    <property type="molecule type" value="mRNA"/>
</dbReference>
<dbReference type="EMBL" id="AF145712">
    <property type="protein sequence ID" value="AAF44344.1"/>
    <property type="molecule type" value="mRNA"/>
</dbReference>
<dbReference type="EMBL" id="BT006995">
    <property type="protein sequence ID" value="AAP35641.1"/>
    <property type="molecule type" value="mRNA"/>
</dbReference>
<dbReference type="EMBL" id="BX510902">
    <property type="protein sequence ID" value="CAD91133.1"/>
    <property type="molecule type" value="mRNA"/>
</dbReference>
<dbReference type="EMBL" id="EU332859">
    <property type="protein sequence ID" value="ABY87548.1"/>
    <property type="molecule type" value="Genomic_DNA"/>
</dbReference>
<dbReference type="EMBL" id="AL353600">
    <property type="status" value="NOT_ANNOTATED_CDS"/>
    <property type="molecule type" value="Genomic_DNA"/>
</dbReference>
<dbReference type="EMBL" id="AL121748">
    <property type="status" value="NOT_ANNOTATED_CDS"/>
    <property type="molecule type" value="Genomic_DNA"/>
</dbReference>
<dbReference type="EMBL" id="CH471072">
    <property type="protein sequence ID" value="EAW85942.1"/>
    <property type="molecule type" value="Genomic_DNA"/>
</dbReference>
<dbReference type="EMBL" id="CH471072">
    <property type="protein sequence ID" value="EAW85944.1"/>
    <property type="molecule type" value="Genomic_DNA"/>
</dbReference>
<dbReference type="EMBL" id="BC007533">
    <property type="protein sequence ID" value="AAH07533.1"/>
    <property type="molecule type" value="mRNA"/>
</dbReference>
<dbReference type="EMBL" id="BC007737">
    <property type="protein sequence ID" value="AAH07737.1"/>
    <property type="molecule type" value="mRNA"/>
</dbReference>
<dbReference type="CCDS" id="CCDS31179.1">
    <molecule id="O14786-3"/>
</dbReference>
<dbReference type="CCDS" id="CCDS31180.1">
    <molecule id="O14786-2"/>
</dbReference>
<dbReference type="CCDS" id="CCDS7177.1">
    <molecule id="O14786-1"/>
</dbReference>
<dbReference type="RefSeq" id="NP_001019799.2">
    <molecule id="O14786-2"/>
    <property type="nucleotide sequence ID" value="NM_001024628.3"/>
</dbReference>
<dbReference type="RefSeq" id="NP_001019800.2">
    <molecule id="O14786-3"/>
    <property type="nucleotide sequence ID" value="NM_001024629.3"/>
</dbReference>
<dbReference type="RefSeq" id="NP_001316997.1">
    <property type="nucleotide sequence ID" value="NM_001330068.1"/>
</dbReference>
<dbReference type="RefSeq" id="NP_003864.4">
    <molecule id="O14786-1"/>
    <property type="nucleotide sequence ID" value="NM_003873.5"/>
</dbReference>
<dbReference type="PDB" id="1KEX">
    <property type="method" value="X-ray"/>
    <property type="resolution" value="1.90 A"/>
    <property type="chains" value="A=273-427"/>
</dbReference>
<dbReference type="PDB" id="2QQI">
    <property type="method" value="X-ray"/>
    <property type="resolution" value="1.80 A"/>
    <property type="chains" value="A=273-586"/>
</dbReference>
<dbReference type="PDB" id="2QQM">
    <property type="method" value="X-ray"/>
    <property type="resolution" value="2.00 A"/>
    <property type="chains" value="A=141-586"/>
</dbReference>
<dbReference type="PDB" id="2QQN">
    <property type="method" value="X-ray"/>
    <property type="resolution" value="2.20 A"/>
    <property type="chains" value="A=273-427"/>
</dbReference>
<dbReference type="PDB" id="3I97">
    <property type="method" value="X-ray"/>
    <property type="resolution" value="2.90 A"/>
    <property type="chains" value="A/B=273-427"/>
</dbReference>
<dbReference type="PDB" id="4DEQ">
    <property type="method" value="X-ray"/>
    <property type="resolution" value="2.65 A"/>
    <property type="chains" value="A/B=274-429"/>
</dbReference>
<dbReference type="PDB" id="4RN5">
    <property type="method" value="X-ray"/>
    <property type="resolution" value="1.73 A"/>
    <property type="chains" value="A=273-427"/>
</dbReference>
<dbReference type="PDB" id="5C7G">
    <property type="method" value="X-ray"/>
    <property type="resolution" value="1.45 A"/>
    <property type="chains" value="A=273-427"/>
</dbReference>
<dbReference type="PDB" id="5IJR">
    <property type="method" value="X-ray"/>
    <property type="resolution" value="1.52 A"/>
    <property type="chains" value="A/B=273-427"/>
</dbReference>
<dbReference type="PDB" id="5IYY">
    <property type="method" value="X-ray"/>
    <property type="resolution" value="1.60 A"/>
    <property type="chains" value="A/B=273-427"/>
</dbReference>
<dbReference type="PDB" id="5J1X">
    <property type="method" value="X-ray"/>
    <property type="resolution" value="2.10 A"/>
    <property type="chains" value="A/B/C/D=273-427"/>
</dbReference>
<dbReference type="PDB" id="5JGI">
    <property type="method" value="X-ray"/>
    <property type="resolution" value="1.38 A"/>
    <property type="chains" value="A/B=273-427"/>
</dbReference>
<dbReference type="PDB" id="5JGQ">
    <property type="method" value="X-ray"/>
    <property type="resolution" value="1.60 A"/>
    <property type="chains" value="A/B=273-427"/>
</dbReference>
<dbReference type="PDB" id="5JHK">
    <property type="method" value="X-ray"/>
    <property type="resolution" value="1.80 A"/>
    <property type="chains" value="A/B=273-427"/>
</dbReference>
<dbReference type="PDB" id="5L73">
    <property type="method" value="X-ray"/>
    <property type="resolution" value="2.24 A"/>
    <property type="chains" value="A/B=628-813"/>
</dbReference>
<dbReference type="PDB" id="6FMC">
    <property type="method" value="X-ray"/>
    <property type="resolution" value="0.90 A"/>
    <property type="chains" value="A=273-427"/>
</dbReference>
<dbReference type="PDB" id="6FMF">
    <property type="method" value="X-ray"/>
    <property type="resolution" value="2.81 A"/>
    <property type="chains" value="A=273-427"/>
</dbReference>
<dbReference type="PDB" id="6TKK">
    <property type="method" value="X-ray"/>
    <property type="resolution" value="1.06 A"/>
    <property type="chains" value="A=273-427"/>
</dbReference>
<dbReference type="PDB" id="7JJC">
    <property type="method" value="X-ray"/>
    <property type="resolution" value="2.36 A"/>
    <property type="chains" value="A/B/C/D=273-427"/>
</dbReference>
<dbReference type="PDB" id="7O1N">
    <property type="method" value="X-ray"/>
    <property type="resolution" value="1.56 A"/>
    <property type="chains" value="A=273-427"/>
</dbReference>
<dbReference type="PDB" id="7P5U">
    <property type="method" value="X-ray"/>
    <property type="resolution" value="1.60 A"/>
    <property type="chains" value="AAA/BBB=273-427"/>
</dbReference>
<dbReference type="PDB" id="8C5G">
    <property type="method" value="X-ray"/>
    <property type="resolution" value="2.70 A"/>
    <property type="chains" value="A/B=271-586"/>
</dbReference>
<dbReference type="PDB" id="8PFE">
    <property type="method" value="X-ray"/>
    <property type="resolution" value="1.35 A"/>
    <property type="chains" value="A/C=273-427"/>
</dbReference>
<dbReference type="PDB" id="9EOU">
    <property type="method" value="X-ray"/>
    <property type="resolution" value="1.55 A"/>
    <property type="chains" value="A=273-586"/>
</dbReference>
<dbReference type="PDBsum" id="1KEX"/>
<dbReference type="PDBsum" id="2QQI"/>
<dbReference type="PDBsum" id="2QQM"/>
<dbReference type="PDBsum" id="2QQN"/>
<dbReference type="PDBsum" id="3I97"/>
<dbReference type="PDBsum" id="4DEQ"/>
<dbReference type="PDBsum" id="4RN5"/>
<dbReference type="PDBsum" id="5C7G"/>
<dbReference type="PDBsum" id="5IJR"/>
<dbReference type="PDBsum" id="5IYY"/>
<dbReference type="PDBsum" id="5J1X"/>
<dbReference type="PDBsum" id="5JGI"/>
<dbReference type="PDBsum" id="5JGQ"/>
<dbReference type="PDBsum" id="5JHK"/>
<dbReference type="PDBsum" id="5L73"/>
<dbReference type="PDBsum" id="6FMC"/>
<dbReference type="PDBsum" id="6FMF"/>
<dbReference type="PDBsum" id="6TKK"/>
<dbReference type="PDBsum" id="7JJC"/>
<dbReference type="PDBsum" id="7O1N"/>
<dbReference type="PDBsum" id="7P5U"/>
<dbReference type="PDBsum" id="8C5G"/>
<dbReference type="PDBsum" id="8PFE"/>
<dbReference type="PDBsum" id="9EOU"/>
<dbReference type="SMR" id="O14786"/>
<dbReference type="BioGRID" id="114356">
    <property type="interactions" value="321"/>
</dbReference>
<dbReference type="CORUM" id="O14786"/>
<dbReference type="DIP" id="DIP-5743N"/>
<dbReference type="FunCoup" id="O14786">
    <property type="interactions" value="904"/>
</dbReference>
<dbReference type="IntAct" id="O14786">
    <property type="interactions" value="57"/>
</dbReference>
<dbReference type="MINT" id="O14786"/>
<dbReference type="STRING" id="9606.ENSP00000265371"/>
<dbReference type="BindingDB" id="O14786"/>
<dbReference type="ChEMBL" id="CHEMBL5174"/>
<dbReference type="GuidetoPHARMACOLOGY" id="2998"/>
<dbReference type="TCDB" id="8.A.47.1.5">
    <property type="family name" value="the neuropilin and tolloid-like (neto) family"/>
</dbReference>
<dbReference type="GlyConnect" id="1557">
    <property type="glycosylation" value="7 N-Linked glycans (4 sites)"/>
</dbReference>
<dbReference type="GlyCosmos" id="O14786">
    <property type="glycosylation" value="11 sites, 10 glycans"/>
</dbReference>
<dbReference type="GlyGen" id="O14786">
    <property type="glycosylation" value="17 sites, 54 N-linked glycans (4 sites), 5 O-linked glycans (8 sites)"/>
</dbReference>
<dbReference type="iPTMnet" id="O14786"/>
<dbReference type="PhosphoSitePlus" id="O14786"/>
<dbReference type="SwissPalm" id="O14786"/>
<dbReference type="BioMuta" id="NRP1"/>
<dbReference type="jPOST" id="O14786"/>
<dbReference type="MassIVE" id="O14786"/>
<dbReference type="PaxDb" id="9606-ENSP00000265371"/>
<dbReference type="PeptideAtlas" id="O14786"/>
<dbReference type="ProteomicsDB" id="48233">
    <molecule id="O14786-1"/>
</dbReference>
<dbReference type="ProteomicsDB" id="48234">
    <molecule id="O14786-2"/>
</dbReference>
<dbReference type="ProteomicsDB" id="64659"/>
<dbReference type="Pumba" id="O14786"/>
<dbReference type="ABCD" id="O14786">
    <property type="antibodies" value="26 sequenced antibodies"/>
</dbReference>
<dbReference type="Antibodypedia" id="3859">
    <property type="antibodies" value="938 antibodies from 42 providers"/>
</dbReference>
<dbReference type="DNASU" id="8829"/>
<dbReference type="Ensembl" id="ENST00000265371.8">
    <molecule id="O14786-1"/>
    <property type="protein sequence ID" value="ENSP00000265371.3"/>
    <property type="gene ID" value="ENSG00000099250.18"/>
</dbReference>
<dbReference type="Ensembl" id="ENST00000374821.9">
    <molecule id="O14786-3"/>
    <property type="protein sequence ID" value="ENSP00000363954.5"/>
    <property type="gene ID" value="ENSG00000099250.18"/>
</dbReference>
<dbReference type="Ensembl" id="ENST00000374822.8">
    <molecule id="O14786-2"/>
    <property type="protein sequence ID" value="ENSP00000363955.4"/>
    <property type="gene ID" value="ENSG00000099250.18"/>
</dbReference>
<dbReference type="Ensembl" id="ENST00000374867.7">
    <molecule id="O14786-1"/>
    <property type="protein sequence ID" value="ENSP00000364001.2"/>
    <property type="gene ID" value="ENSG00000099250.18"/>
</dbReference>
<dbReference type="GeneID" id="8829"/>
<dbReference type="KEGG" id="hsa:8829"/>
<dbReference type="MANE-Select" id="ENST00000374867.7">
    <property type="protein sequence ID" value="ENSP00000364001.2"/>
    <property type="RefSeq nucleotide sequence ID" value="NM_003873.7"/>
    <property type="RefSeq protein sequence ID" value="NP_003864.5"/>
</dbReference>
<dbReference type="UCSC" id="uc001iwx.5">
    <molecule id="O14786-1"/>
    <property type="organism name" value="human"/>
</dbReference>
<dbReference type="AGR" id="HGNC:8004"/>
<dbReference type="CTD" id="8829"/>
<dbReference type="DisGeNET" id="8829"/>
<dbReference type="GeneCards" id="NRP1"/>
<dbReference type="HGNC" id="HGNC:8004">
    <property type="gene designation" value="NRP1"/>
</dbReference>
<dbReference type="HPA" id="ENSG00000099250">
    <property type="expression patterns" value="Low tissue specificity"/>
</dbReference>
<dbReference type="MIM" id="602069">
    <property type="type" value="gene"/>
</dbReference>
<dbReference type="neXtProt" id="NX_O14786"/>
<dbReference type="OpenTargets" id="ENSG00000099250"/>
<dbReference type="PharmGKB" id="PA31783"/>
<dbReference type="VEuPathDB" id="HostDB:ENSG00000099250"/>
<dbReference type="eggNOG" id="ENOG502QUEH">
    <property type="taxonomic scope" value="Eukaryota"/>
</dbReference>
<dbReference type="GeneTree" id="ENSGT00940000157169"/>
<dbReference type="HOGENOM" id="CLU_015228_6_1_1"/>
<dbReference type="InParanoid" id="O14786"/>
<dbReference type="OMA" id="QEDCTKP"/>
<dbReference type="OrthoDB" id="6155811at2759"/>
<dbReference type="PAN-GO" id="O14786">
    <property type="GO annotations" value="15 GO annotations based on evolutionary models"/>
</dbReference>
<dbReference type="PhylomeDB" id="O14786"/>
<dbReference type="TreeFam" id="TF316506"/>
<dbReference type="PathwayCommons" id="O14786"/>
<dbReference type="Reactome" id="R-HSA-194306">
    <property type="pathway name" value="Neurophilin interactions with VEGF and VEGFR"/>
</dbReference>
<dbReference type="Reactome" id="R-HSA-376176">
    <property type="pathway name" value="Signaling by ROBO receptors"/>
</dbReference>
<dbReference type="Reactome" id="R-HSA-399954">
    <property type="pathway name" value="Sema3A PAK dependent Axon repulsion"/>
</dbReference>
<dbReference type="Reactome" id="R-HSA-399955">
    <property type="pathway name" value="SEMA3A-Plexin repulsion signaling by inhibiting Integrin adhesion"/>
</dbReference>
<dbReference type="Reactome" id="R-HSA-399956">
    <property type="pathway name" value="CRMPs in Sema3A signaling"/>
</dbReference>
<dbReference type="Reactome" id="R-HSA-445144">
    <property type="pathway name" value="Signal transduction by L1"/>
</dbReference>
<dbReference type="Reactome" id="R-HSA-447041">
    <property type="pathway name" value="CHL1 interactions"/>
</dbReference>
<dbReference type="Reactome" id="R-HSA-9694614">
    <property type="pathway name" value="Attachment and Entry"/>
</dbReference>
<dbReference type="SignaLink" id="O14786"/>
<dbReference type="SIGNOR" id="O14786"/>
<dbReference type="BioGRID-ORCS" id="8829">
    <property type="hits" value="19 hits in 1158 CRISPR screens"/>
</dbReference>
<dbReference type="ChiTaRS" id="NRP1">
    <property type="organism name" value="human"/>
</dbReference>
<dbReference type="EvolutionaryTrace" id="O14786"/>
<dbReference type="GeneWiki" id="Neuropilin_1"/>
<dbReference type="GenomeRNAi" id="8829"/>
<dbReference type="Pharos" id="O14786">
    <property type="development level" value="Tchem"/>
</dbReference>
<dbReference type="PRO" id="PR:O14786"/>
<dbReference type="Proteomes" id="UP000005640">
    <property type="component" value="Chromosome 10"/>
</dbReference>
<dbReference type="RNAct" id="O14786">
    <property type="molecule type" value="protein"/>
</dbReference>
<dbReference type="Bgee" id="ENSG00000099250">
    <property type="expression patterns" value="Expressed in stromal cell of endometrium and 195 other cell types or tissues"/>
</dbReference>
<dbReference type="ExpressionAtlas" id="O14786">
    <property type="expression patterns" value="baseline and differential"/>
</dbReference>
<dbReference type="GO" id="GO:0030424">
    <property type="term" value="C:axon"/>
    <property type="evidence" value="ECO:0000250"/>
    <property type="project" value="BHF-UCL"/>
</dbReference>
<dbReference type="GO" id="GO:0031410">
    <property type="term" value="C:cytoplasmic vesicle"/>
    <property type="evidence" value="ECO:0000304"/>
    <property type="project" value="BHF-UCL"/>
</dbReference>
<dbReference type="GO" id="GO:0005829">
    <property type="term" value="C:cytosol"/>
    <property type="evidence" value="ECO:0000314"/>
    <property type="project" value="BHF-UCL"/>
</dbReference>
<dbReference type="GO" id="GO:0005769">
    <property type="term" value="C:early endosome"/>
    <property type="evidence" value="ECO:0000250"/>
    <property type="project" value="BHF-UCL"/>
</dbReference>
<dbReference type="GO" id="GO:0005615">
    <property type="term" value="C:extracellular space"/>
    <property type="evidence" value="ECO:0007005"/>
    <property type="project" value="UniProtKB"/>
</dbReference>
<dbReference type="GO" id="GO:0005925">
    <property type="term" value="C:focal adhesion"/>
    <property type="evidence" value="ECO:0000314"/>
    <property type="project" value="BHF-UCL"/>
</dbReference>
<dbReference type="GO" id="GO:0098978">
    <property type="term" value="C:glutamatergic synapse"/>
    <property type="evidence" value="ECO:0007669"/>
    <property type="project" value="Ensembl"/>
</dbReference>
<dbReference type="GO" id="GO:0031966">
    <property type="term" value="C:mitochondrial membrane"/>
    <property type="evidence" value="ECO:0007669"/>
    <property type="project" value="UniProtKB-SubCell"/>
</dbReference>
<dbReference type="GO" id="GO:0005883">
    <property type="term" value="C:neurofilament"/>
    <property type="evidence" value="ECO:0007669"/>
    <property type="project" value="Ensembl"/>
</dbReference>
<dbReference type="GO" id="GO:0043005">
    <property type="term" value="C:neuron projection"/>
    <property type="evidence" value="ECO:0000250"/>
    <property type="project" value="ARUK-UCL"/>
</dbReference>
<dbReference type="GO" id="GO:0005886">
    <property type="term" value="C:plasma membrane"/>
    <property type="evidence" value="ECO:0000314"/>
    <property type="project" value="BHF-UCL"/>
</dbReference>
<dbReference type="GO" id="GO:0045211">
    <property type="term" value="C:postsynaptic membrane"/>
    <property type="evidence" value="ECO:0007669"/>
    <property type="project" value="Ensembl"/>
</dbReference>
<dbReference type="GO" id="GO:0043235">
    <property type="term" value="C:receptor complex"/>
    <property type="evidence" value="ECO:0000304"/>
    <property type="project" value="BHF-UCL"/>
</dbReference>
<dbReference type="GO" id="GO:0002116">
    <property type="term" value="C:semaphorin receptor complex"/>
    <property type="evidence" value="ECO:0000303"/>
    <property type="project" value="BHF-UCL"/>
</dbReference>
<dbReference type="GO" id="GO:0097443">
    <property type="term" value="C:sorting endosome"/>
    <property type="evidence" value="ECO:0000250"/>
    <property type="project" value="BHF-UCL"/>
</dbReference>
<dbReference type="GO" id="GO:0015026">
    <property type="term" value="F:coreceptor activity"/>
    <property type="evidence" value="ECO:0000304"/>
    <property type="project" value="BHF-UCL"/>
</dbReference>
<dbReference type="GO" id="GO:0019955">
    <property type="term" value="F:cytokine binding"/>
    <property type="evidence" value="ECO:0000303"/>
    <property type="project" value="BHF-UCL"/>
</dbReference>
<dbReference type="GO" id="GO:0019838">
    <property type="term" value="F:growth factor binding"/>
    <property type="evidence" value="ECO:0000353"/>
    <property type="project" value="UniProtKB"/>
</dbReference>
<dbReference type="GO" id="GO:0005096">
    <property type="term" value="F:GTPase activator activity"/>
    <property type="evidence" value="ECO:0000315"/>
    <property type="project" value="BHF-UCL"/>
</dbReference>
<dbReference type="GO" id="GO:0008201">
    <property type="term" value="F:heparin binding"/>
    <property type="evidence" value="ECO:0007669"/>
    <property type="project" value="UniProtKB-KW"/>
</dbReference>
<dbReference type="GO" id="GO:0046872">
    <property type="term" value="F:metal ion binding"/>
    <property type="evidence" value="ECO:0007669"/>
    <property type="project" value="UniProtKB-KW"/>
</dbReference>
<dbReference type="GO" id="GO:0019901">
    <property type="term" value="F:protein kinase binding"/>
    <property type="evidence" value="ECO:0007669"/>
    <property type="project" value="Ensembl"/>
</dbReference>
<dbReference type="GO" id="GO:0017154">
    <property type="term" value="F:semaphorin receptor activity"/>
    <property type="evidence" value="ECO:0000318"/>
    <property type="project" value="GO_Central"/>
</dbReference>
<dbReference type="GO" id="GO:0038085">
    <property type="term" value="F:vascular endothelial growth factor binding"/>
    <property type="evidence" value="ECO:0000353"/>
    <property type="project" value="BHF-UCL"/>
</dbReference>
<dbReference type="GO" id="GO:0005021">
    <property type="term" value="F:vascular endothelial growth factor receptor activity"/>
    <property type="evidence" value="ECO:0000250"/>
    <property type="project" value="BHF-UCL"/>
</dbReference>
<dbReference type="GO" id="GO:0001525">
    <property type="term" value="P:angiogenesis"/>
    <property type="evidence" value="ECO:0000315"/>
    <property type="project" value="BHF-UCL"/>
</dbReference>
<dbReference type="GO" id="GO:0060978">
    <property type="term" value="P:angiogenesis involved in coronary vascular morphogenesis"/>
    <property type="evidence" value="ECO:0000250"/>
    <property type="project" value="BHF-UCL"/>
</dbReference>
<dbReference type="GO" id="GO:0009887">
    <property type="term" value="P:animal organ morphogenesis"/>
    <property type="evidence" value="ECO:0000304"/>
    <property type="project" value="ProtInc"/>
</dbReference>
<dbReference type="GO" id="GO:0048844">
    <property type="term" value="P:artery morphogenesis"/>
    <property type="evidence" value="ECO:0000250"/>
    <property type="project" value="BHF-UCL"/>
</dbReference>
<dbReference type="GO" id="GO:0048846">
    <property type="term" value="P:axon extension involved in axon guidance"/>
    <property type="evidence" value="ECO:0000250"/>
    <property type="project" value="BHF-UCL"/>
</dbReference>
<dbReference type="GO" id="GO:0007411">
    <property type="term" value="P:axon guidance"/>
    <property type="evidence" value="ECO:0000318"/>
    <property type="project" value="GO_Central"/>
</dbReference>
<dbReference type="GO" id="GO:0007413">
    <property type="term" value="P:axonal fasciculation"/>
    <property type="evidence" value="ECO:0007669"/>
    <property type="project" value="Ensembl"/>
</dbReference>
<dbReference type="GO" id="GO:0060385">
    <property type="term" value="P:axonogenesis involved in innervation"/>
    <property type="evidence" value="ECO:0000250"/>
    <property type="project" value="BHF-UCL"/>
</dbReference>
<dbReference type="GO" id="GO:0150020">
    <property type="term" value="P:basal dendrite arborization"/>
    <property type="evidence" value="ECO:0000250"/>
    <property type="project" value="ARUK-UCL"/>
</dbReference>
<dbReference type="GO" id="GO:0150018">
    <property type="term" value="P:basal dendrite development"/>
    <property type="evidence" value="ECO:0000250"/>
    <property type="project" value="ARUK-UCL"/>
</dbReference>
<dbReference type="GO" id="GO:0001569">
    <property type="term" value="P:branching involved in blood vessel morphogenesis"/>
    <property type="evidence" value="ECO:0000250"/>
    <property type="project" value="BHF-UCL"/>
</dbReference>
<dbReference type="GO" id="GO:0021785">
    <property type="term" value="P:branchiomotor neuron axon guidance"/>
    <property type="evidence" value="ECO:0000250"/>
    <property type="project" value="ParkinsonsUK-UCL"/>
</dbReference>
<dbReference type="GO" id="GO:0002042">
    <property type="term" value="P:cell migration involved in sprouting angiogenesis"/>
    <property type="evidence" value="ECO:0000250"/>
    <property type="project" value="BHF-UCL"/>
</dbReference>
<dbReference type="GO" id="GO:0007267">
    <property type="term" value="P:cell-cell signaling"/>
    <property type="evidence" value="ECO:0000304"/>
    <property type="project" value="ProtInc"/>
</dbReference>
<dbReference type="GO" id="GO:0035729">
    <property type="term" value="P:cellular response to hepatocyte growth factor stimulus"/>
    <property type="evidence" value="ECO:0000315"/>
    <property type="project" value="BHF-UCL"/>
</dbReference>
<dbReference type="GO" id="GO:0035924">
    <property type="term" value="P:cellular response to vascular endothelial growth factor stimulus"/>
    <property type="evidence" value="ECO:0000250"/>
    <property type="project" value="BHF-UCL"/>
</dbReference>
<dbReference type="GO" id="GO:0071679">
    <property type="term" value="P:commissural neuron axon guidance"/>
    <property type="evidence" value="ECO:0000250"/>
    <property type="project" value="BHF-UCL"/>
</dbReference>
<dbReference type="GO" id="GO:0060982">
    <property type="term" value="P:coronary artery morphogenesis"/>
    <property type="evidence" value="ECO:0007669"/>
    <property type="project" value="Ensembl"/>
</dbReference>
<dbReference type="GO" id="GO:0060666">
    <property type="term" value="P:dichotomous subdivision of terminal units involved in salivary gland branching"/>
    <property type="evidence" value="ECO:0007669"/>
    <property type="project" value="Ensembl"/>
</dbReference>
<dbReference type="GO" id="GO:1904835">
    <property type="term" value="P:dorsal root ganglion morphogenesis"/>
    <property type="evidence" value="ECO:0007669"/>
    <property type="project" value="Ensembl"/>
</dbReference>
<dbReference type="GO" id="GO:0035767">
    <property type="term" value="P:endothelial cell chemotaxis"/>
    <property type="evidence" value="ECO:0000315"/>
    <property type="project" value="BHF-UCL"/>
</dbReference>
<dbReference type="GO" id="GO:0097102">
    <property type="term" value="P:endothelial tip cell fate specification"/>
    <property type="evidence" value="ECO:0000250"/>
    <property type="project" value="BHF-UCL"/>
</dbReference>
<dbReference type="GO" id="GO:0021612">
    <property type="term" value="P:facial nerve structural organization"/>
    <property type="evidence" value="ECO:0000250"/>
    <property type="project" value="ParkinsonsUK-UCL"/>
</dbReference>
<dbReference type="GO" id="GO:1903375">
    <property type="term" value="P:facioacoustic ganglion development"/>
    <property type="evidence" value="ECO:0007669"/>
    <property type="project" value="Ensembl"/>
</dbReference>
<dbReference type="GO" id="GO:0021828">
    <property type="term" value="P:gonadotrophin-releasing hormone neuronal migration to the hypothalamus"/>
    <property type="evidence" value="ECO:0007669"/>
    <property type="project" value="Ensembl"/>
</dbReference>
<dbReference type="GO" id="GO:0048012">
    <property type="term" value="P:hepatocyte growth factor receptor signaling pathway"/>
    <property type="evidence" value="ECO:0000315"/>
    <property type="project" value="BHF-UCL"/>
</dbReference>
<dbReference type="GO" id="GO:0007229">
    <property type="term" value="P:integrin-mediated signaling pathway"/>
    <property type="evidence" value="ECO:0000315"/>
    <property type="project" value="BHF-UCL"/>
</dbReference>
<dbReference type="GO" id="GO:0008045">
    <property type="term" value="P:motor neuron axon guidance"/>
    <property type="evidence" value="ECO:0000250"/>
    <property type="project" value="ParkinsonsUK-UCL"/>
</dbReference>
<dbReference type="GO" id="GO:0097475">
    <property type="term" value="P:motor neuron migration"/>
    <property type="evidence" value="ECO:0000250"/>
    <property type="project" value="UniProtKB"/>
</dbReference>
<dbReference type="GO" id="GO:0048843">
    <property type="term" value="P:negative regulation of axon extension involved in axon guidance"/>
    <property type="evidence" value="ECO:0007669"/>
    <property type="project" value="Ensembl"/>
</dbReference>
<dbReference type="GO" id="GO:2001237">
    <property type="term" value="P:negative regulation of extrinsic apoptotic signaling pathway"/>
    <property type="evidence" value="ECO:0007669"/>
    <property type="project" value="Ensembl"/>
</dbReference>
<dbReference type="GO" id="GO:0043524">
    <property type="term" value="P:negative regulation of neuron apoptotic process"/>
    <property type="evidence" value="ECO:0007669"/>
    <property type="project" value="Ensembl"/>
</dbReference>
<dbReference type="GO" id="GO:0001755">
    <property type="term" value="P:neural crest cell migration"/>
    <property type="evidence" value="ECO:0000318"/>
    <property type="project" value="GO_Central"/>
</dbReference>
<dbReference type="GO" id="GO:1901166">
    <property type="term" value="P:neural crest cell migration involved in autonomic nervous system development"/>
    <property type="evidence" value="ECO:0000250"/>
    <property type="project" value="BHF-UCL"/>
</dbReference>
<dbReference type="GO" id="GO:0001764">
    <property type="term" value="P:neuron migration"/>
    <property type="evidence" value="ECO:0000250"/>
    <property type="project" value="BHF-UCL"/>
</dbReference>
<dbReference type="GO" id="GO:0038189">
    <property type="term" value="P:neuropilin signaling pathway"/>
    <property type="evidence" value="ECO:0000315"/>
    <property type="project" value="BHF-UCL"/>
</dbReference>
<dbReference type="GO" id="GO:1905040">
    <property type="term" value="P:otic placode development"/>
    <property type="evidence" value="ECO:0007669"/>
    <property type="project" value="Ensembl"/>
</dbReference>
<dbReference type="GO" id="GO:0003148">
    <property type="term" value="P:outflow tract septum morphogenesis"/>
    <property type="evidence" value="ECO:0000250"/>
    <property type="project" value="BHF-UCL"/>
</dbReference>
<dbReference type="GO" id="GO:0048008">
    <property type="term" value="P:platelet-derived growth factor receptor signaling pathway"/>
    <property type="evidence" value="ECO:0000315"/>
    <property type="project" value="BHF-UCL"/>
</dbReference>
<dbReference type="GO" id="GO:0050918">
    <property type="term" value="P:positive chemotaxis"/>
    <property type="evidence" value="ECO:0000250"/>
    <property type="project" value="BHF-UCL"/>
</dbReference>
<dbReference type="GO" id="GO:0045766">
    <property type="term" value="P:positive regulation of angiogenesis"/>
    <property type="evidence" value="ECO:0007669"/>
    <property type="project" value="Ensembl"/>
</dbReference>
<dbReference type="GO" id="GO:0048842">
    <property type="term" value="P:positive regulation of axon extension involved in axon guidance"/>
    <property type="evidence" value="ECO:0000250"/>
    <property type="project" value="BHF-UCL"/>
</dbReference>
<dbReference type="GO" id="GO:0090050">
    <property type="term" value="P:positive regulation of cell migration involved in sprouting angiogenesis"/>
    <property type="evidence" value="ECO:0007669"/>
    <property type="project" value="Ensembl"/>
</dbReference>
<dbReference type="GO" id="GO:0010595">
    <property type="term" value="P:positive regulation of endothelial cell migration"/>
    <property type="evidence" value="ECO:0000315"/>
    <property type="project" value="BHF-UCL"/>
</dbReference>
<dbReference type="GO" id="GO:0001938">
    <property type="term" value="P:positive regulation of endothelial cell proliferation"/>
    <property type="evidence" value="ECO:0000304"/>
    <property type="project" value="BHF-UCL"/>
</dbReference>
<dbReference type="GO" id="GO:0070374">
    <property type="term" value="P:positive regulation of ERK1 and ERK2 cascade"/>
    <property type="evidence" value="ECO:0000250"/>
    <property type="project" value="BHF-UCL"/>
</dbReference>
<dbReference type="GO" id="GO:0051491">
    <property type="term" value="P:positive regulation of filopodium assembly"/>
    <property type="evidence" value="ECO:0000315"/>
    <property type="project" value="BHF-UCL"/>
</dbReference>
<dbReference type="GO" id="GO:0051894">
    <property type="term" value="P:positive regulation of focal adhesion assembly"/>
    <property type="evidence" value="ECO:0000314"/>
    <property type="project" value="BHF-UCL"/>
</dbReference>
<dbReference type="GO" id="GO:0042327">
    <property type="term" value="P:positive regulation of phosphorylation"/>
    <property type="evidence" value="ECO:0007669"/>
    <property type="project" value="Ensembl"/>
</dbReference>
<dbReference type="GO" id="GO:0014911">
    <property type="term" value="P:positive regulation of smooth muscle cell migration"/>
    <property type="evidence" value="ECO:0000304"/>
    <property type="project" value="BHF-UCL"/>
</dbReference>
<dbReference type="GO" id="GO:0051496">
    <property type="term" value="P:positive regulation of stress fiber assembly"/>
    <property type="evidence" value="ECO:0000315"/>
    <property type="project" value="BHF-UCL"/>
</dbReference>
<dbReference type="GO" id="GO:1900026">
    <property type="term" value="P:positive regulation of substrate adhesion-dependent cell spreading"/>
    <property type="evidence" value="ECO:0000315"/>
    <property type="project" value="BHF-UCL"/>
</dbReference>
<dbReference type="GO" id="GO:0099173">
    <property type="term" value="P:postsynapse organization"/>
    <property type="evidence" value="ECO:0007669"/>
    <property type="project" value="Ensembl"/>
</dbReference>
<dbReference type="GO" id="GO:1902946">
    <property type="term" value="P:protein localization to early endosome"/>
    <property type="evidence" value="ECO:0000250"/>
    <property type="project" value="BHF-UCL"/>
</dbReference>
<dbReference type="GO" id="GO:0032489">
    <property type="term" value="P:regulation of Cdc42 protein signal transduction"/>
    <property type="evidence" value="ECO:0000315"/>
    <property type="project" value="BHF-UCL"/>
</dbReference>
<dbReference type="GO" id="GO:0030947">
    <property type="term" value="P:regulation of vascular endothelial growth factor receptor signaling pathway"/>
    <property type="evidence" value="ECO:0000318"/>
    <property type="project" value="GO_Central"/>
</dbReference>
<dbReference type="GO" id="GO:0060627">
    <property type="term" value="P:regulation of vesicle-mediated transport"/>
    <property type="evidence" value="ECO:0000304"/>
    <property type="project" value="BHF-UCL"/>
</dbReference>
<dbReference type="GO" id="GO:0061441">
    <property type="term" value="P:renal artery morphogenesis"/>
    <property type="evidence" value="ECO:0007669"/>
    <property type="project" value="Ensembl"/>
</dbReference>
<dbReference type="GO" id="GO:0009611">
    <property type="term" value="P:response to wounding"/>
    <property type="evidence" value="ECO:0000318"/>
    <property type="project" value="GO_Central"/>
</dbReference>
<dbReference type="GO" id="GO:0061299">
    <property type="term" value="P:retina vasculature morphogenesis in camera-type eye"/>
    <property type="evidence" value="ECO:0000250"/>
    <property type="project" value="BHF-UCL"/>
</dbReference>
<dbReference type="GO" id="GO:0031290">
    <property type="term" value="P:retinal ganglion cell axon guidance"/>
    <property type="evidence" value="ECO:0000250"/>
    <property type="project" value="BHF-UCL"/>
</dbReference>
<dbReference type="GO" id="GO:0071526">
    <property type="term" value="P:semaphorin-plexin signaling pathway"/>
    <property type="evidence" value="ECO:0000250"/>
    <property type="project" value="BHF-UCL"/>
</dbReference>
<dbReference type="GO" id="GO:0097374">
    <property type="term" value="P:sensory neuron axon guidance"/>
    <property type="evidence" value="ECO:0007669"/>
    <property type="project" value="Ensembl"/>
</dbReference>
<dbReference type="GO" id="GO:0007165">
    <property type="term" value="P:signal transduction"/>
    <property type="evidence" value="ECO:0000304"/>
    <property type="project" value="ProtInc"/>
</dbReference>
<dbReference type="GO" id="GO:0002040">
    <property type="term" value="P:sprouting angiogenesis"/>
    <property type="evidence" value="ECO:0000250"/>
    <property type="project" value="BHF-UCL"/>
</dbReference>
<dbReference type="GO" id="GO:0006930">
    <property type="term" value="P:substrate-dependent cell migration, cell extension"/>
    <property type="evidence" value="ECO:0000315"/>
    <property type="project" value="BHF-UCL"/>
</dbReference>
<dbReference type="GO" id="GO:0046718">
    <property type="term" value="P:symbiont entry into host cell"/>
    <property type="evidence" value="ECO:0000314"/>
    <property type="project" value="UniProtKB"/>
</dbReference>
<dbReference type="GO" id="GO:0061549">
    <property type="term" value="P:sympathetic ganglion development"/>
    <property type="evidence" value="ECO:0000250"/>
    <property type="project" value="BHF-UCL"/>
</dbReference>
<dbReference type="GO" id="GO:0097490">
    <property type="term" value="P:sympathetic neuron projection extension"/>
    <property type="evidence" value="ECO:0000250"/>
    <property type="project" value="BHF-UCL"/>
</dbReference>
<dbReference type="GO" id="GO:0097491">
    <property type="term" value="P:sympathetic neuron projection guidance"/>
    <property type="evidence" value="ECO:0000250"/>
    <property type="project" value="BHF-UCL"/>
</dbReference>
<dbReference type="GO" id="GO:0061551">
    <property type="term" value="P:trigeminal ganglion development"/>
    <property type="evidence" value="ECO:0007669"/>
    <property type="project" value="Ensembl"/>
</dbReference>
<dbReference type="GO" id="GO:0021637">
    <property type="term" value="P:trigeminal nerve structural organization"/>
    <property type="evidence" value="ECO:0000250"/>
    <property type="project" value="ParkinsonsUK-UCL"/>
</dbReference>
<dbReference type="GO" id="GO:0048010">
    <property type="term" value="P:vascular endothelial growth factor receptor signaling pathway"/>
    <property type="evidence" value="ECO:0000315"/>
    <property type="project" value="BHF-UCL"/>
</dbReference>
<dbReference type="GO" id="GO:0001570">
    <property type="term" value="P:vasculogenesis"/>
    <property type="evidence" value="ECO:0000318"/>
    <property type="project" value="GO_Central"/>
</dbReference>
<dbReference type="GO" id="GO:0038190">
    <property type="term" value="P:VEGF-activated neuropilin signaling pathway"/>
    <property type="evidence" value="ECO:0000315"/>
    <property type="project" value="BHF-UCL"/>
</dbReference>
<dbReference type="GO" id="GO:0036486">
    <property type="term" value="P:ventral trunk neural crest cell migration"/>
    <property type="evidence" value="ECO:0007669"/>
    <property type="project" value="Ensembl"/>
</dbReference>
<dbReference type="GO" id="GO:0021649">
    <property type="term" value="P:vestibulocochlear nerve structural organization"/>
    <property type="evidence" value="ECO:0007669"/>
    <property type="project" value="Ensembl"/>
</dbReference>
<dbReference type="CDD" id="cd00041">
    <property type="entry name" value="CUB"/>
    <property type="match status" value="2"/>
</dbReference>
<dbReference type="CDD" id="cd00057">
    <property type="entry name" value="FA58C"/>
    <property type="match status" value="2"/>
</dbReference>
<dbReference type="CDD" id="cd06263">
    <property type="entry name" value="MAM"/>
    <property type="match status" value="1"/>
</dbReference>
<dbReference type="FunFam" id="2.60.120.260:FF:000002">
    <property type="entry name" value="Coagulation factor VIII"/>
    <property type="match status" value="1"/>
</dbReference>
<dbReference type="FunFam" id="2.60.120.200:FF:000043">
    <property type="entry name" value="Neuropilin"/>
    <property type="match status" value="1"/>
</dbReference>
<dbReference type="FunFam" id="2.60.120.260:FF:000013">
    <property type="entry name" value="Neuropilin"/>
    <property type="match status" value="1"/>
</dbReference>
<dbReference type="FunFam" id="2.60.120.290:FF:000003">
    <property type="entry name" value="Neuropilin"/>
    <property type="match status" value="1"/>
</dbReference>
<dbReference type="FunFam" id="2.60.120.290:FF:000010">
    <property type="entry name" value="Neuropilin"/>
    <property type="match status" value="1"/>
</dbReference>
<dbReference type="Gene3D" id="2.60.120.200">
    <property type="match status" value="1"/>
</dbReference>
<dbReference type="Gene3D" id="2.60.120.260">
    <property type="entry name" value="Galactose-binding domain-like"/>
    <property type="match status" value="2"/>
</dbReference>
<dbReference type="Gene3D" id="2.60.120.290">
    <property type="entry name" value="Spermadhesin, CUB domain"/>
    <property type="match status" value="2"/>
</dbReference>
<dbReference type="InterPro" id="IPR013320">
    <property type="entry name" value="ConA-like_dom_sf"/>
</dbReference>
<dbReference type="InterPro" id="IPR000859">
    <property type="entry name" value="CUB_dom"/>
</dbReference>
<dbReference type="InterPro" id="IPR000421">
    <property type="entry name" value="FA58C"/>
</dbReference>
<dbReference type="InterPro" id="IPR008979">
    <property type="entry name" value="Galactose-bd-like_sf"/>
</dbReference>
<dbReference type="InterPro" id="IPR000998">
    <property type="entry name" value="MAM_dom"/>
</dbReference>
<dbReference type="InterPro" id="IPR014648">
    <property type="entry name" value="Neuropilin"/>
</dbReference>
<dbReference type="InterPro" id="IPR022579">
    <property type="entry name" value="Neuropilin_C"/>
</dbReference>
<dbReference type="InterPro" id="IPR050633">
    <property type="entry name" value="Neuropilin_MCO_CoagFactor"/>
</dbReference>
<dbReference type="InterPro" id="IPR035914">
    <property type="entry name" value="Sperma_CUB_dom_sf"/>
</dbReference>
<dbReference type="PANTHER" id="PTHR46806">
    <property type="entry name" value="F5/8 TYPE C DOMAIN-CONTAINING PROTEIN"/>
    <property type="match status" value="1"/>
</dbReference>
<dbReference type="PANTHER" id="PTHR46806:SF4">
    <property type="entry name" value="NEUROPILIN-1"/>
    <property type="match status" value="1"/>
</dbReference>
<dbReference type="Pfam" id="PF00431">
    <property type="entry name" value="CUB"/>
    <property type="match status" value="2"/>
</dbReference>
<dbReference type="Pfam" id="PF11980">
    <property type="entry name" value="DUF3481"/>
    <property type="match status" value="1"/>
</dbReference>
<dbReference type="Pfam" id="PF00754">
    <property type="entry name" value="F5_F8_type_C"/>
    <property type="match status" value="2"/>
</dbReference>
<dbReference type="Pfam" id="PF00629">
    <property type="entry name" value="MAM"/>
    <property type="match status" value="1"/>
</dbReference>
<dbReference type="PIRSF" id="PIRSF036960">
    <property type="entry name" value="Neuropilin"/>
    <property type="match status" value="1"/>
</dbReference>
<dbReference type="PRINTS" id="PR00020">
    <property type="entry name" value="MAMDOMAIN"/>
</dbReference>
<dbReference type="SMART" id="SM00042">
    <property type="entry name" value="CUB"/>
    <property type="match status" value="2"/>
</dbReference>
<dbReference type="SMART" id="SM00231">
    <property type="entry name" value="FA58C"/>
    <property type="match status" value="2"/>
</dbReference>
<dbReference type="SMART" id="SM00137">
    <property type="entry name" value="MAM"/>
    <property type="match status" value="1"/>
</dbReference>
<dbReference type="SUPFAM" id="SSF49899">
    <property type="entry name" value="Concanavalin A-like lectins/glucanases"/>
    <property type="match status" value="1"/>
</dbReference>
<dbReference type="SUPFAM" id="SSF49785">
    <property type="entry name" value="Galactose-binding domain-like"/>
    <property type="match status" value="2"/>
</dbReference>
<dbReference type="SUPFAM" id="SSF49854">
    <property type="entry name" value="Spermadhesin, CUB domain"/>
    <property type="match status" value="2"/>
</dbReference>
<dbReference type="PROSITE" id="PS01180">
    <property type="entry name" value="CUB"/>
    <property type="match status" value="2"/>
</dbReference>
<dbReference type="PROSITE" id="PS01285">
    <property type="entry name" value="FA58C_1"/>
    <property type="match status" value="2"/>
</dbReference>
<dbReference type="PROSITE" id="PS01286">
    <property type="entry name" value="FA58C_2"/>
    <property type="match status" value="2"/>
</dbReference>
<dbReference type="PROSITE" id="PS50022">
    <property type="entry name" value="FA58C_3"/>
    <property type="match status" value="2"/>
</dbReference>
<dbReference type="PROSITE" id="PS00740">
    <property type="entry name" value="MAM_1"/>
    <property type="match status" value="1"/>
</dbReference>
<dbReference type="PROSITE" id="PS50060">
    <property type="entry name" value="MAM_2"/>
    <property type="match status" value="1"/>
</dbReference>
<keyword id="KW-0002">3D-structure</keyword>
<keyword id="KW-0025">Alternative splicing</keyword>
<keyword id="KW-0037">Angiogenesis</keyword>
<keyword id="KW-0106">Calcium</keyword>
<keyword id="KW-1003">Cell membrane</keyword>
<keyword id="KW-0963">Cytoplasm</keyword>
<keyword id="KW-0217">Developmental protein</keyword>
<keyword id="KW-0221">Differentiation</keyword>
<keyword id="KW-0903">Direct protein sequencing</keyword>
<keyword id="KW-1015">Disulfide bond</keyword>
<keyword id="KW-0325">Glycoprotein</keyword>
<keyword id="KW-0357">Heparan sulfate</keyword>
<keyword id="KW-0358">Heparin-binding</keyword>
<keyword id="KW-0945">Host-virus interaction</keyword>
<keyword id="KW-0472">Membrane</keyword>
<keyword id="KW-0479">Metal-binding</keyword>
<keyword id="KW-0496">Mitochondrion</keyword>
<keyword id="KW-0524">Neurogenesis</keyword>
<keyword id="KW-0597">Phosphoprotein</keyword>
<keyword id="KW-0654">Proteoglycan</keyword>
<keyword id="KW-1267">Proteomics identification</keyword>
<keyword id="KW-0675">Receptor</keyword>
<keyword id="KW-1185">Reference proteome</keyword>
<keyword id="KW-0677">Repeat</keyword>
<keyword id="KW-0964">Secreted</keyword>
<keyword id="KW-0732">Signal</keyword>
<keyword id="KW-0812">Transmembrane</keyword>
<keyword id="KW-1133">Transmembrane helix</keyword>
<evidence type="ECO:0000250" key="1">
    <source>
        <dbReference type="UniProtKB" id="P97333"/>
    </source>
</evidence>
<evidence type="ECO:0000255" key="2"/>
<evidence type="ECO:0000255" key="3">
    <source>
        <dbReference type="PROSITE-ProRule" id="PRU00059"/>
    </source>
</evidence>
<evidence type="ECO:0000255" key="4">
    <source>
        <dbReference type="PROSITE-ProRule" id="PRU00081"/>
    </source>
</evidence>
<evidence type="ECO:0000255" key="5">
    <source>
        <dbReference type="PROSITE-ProRule" id="PRU00128"/>
    </source>
</evidence>
<evidence type="ECO:0000256" key="6">
    <source>
        <dbReference type="SAM" id="MobiDB-lite"/>
    </source>
</evidence>
<evidence type="ECO:0000269" key="7">
    <source>
    </source>
</evidence>
<evidence type="ECO:0000269" key="8">
    <source>
    </source>
</evidence>
<evidence type="ECO:0000269" key="9">
    <source>
    </source>
</evidence>
<evidence type="ECO:0000269" key="10">
    <source>
    </source>
</evidence>
<evidence type="ECO:0000269" key="11">
    <source>
    </source>
</evidence>
<evidence type="ECO:0000269" key="12">
    <source>
    </source>
</evidence>
<evidence type="ECO:0000269" key="13">
    <source>
    </source>
</evidence>
<evidence type="ECO:0000269" key="14">
    <source>
    </source>
</evidence>
<evidence type="ECO:0000269" key="15">
    <source>
    </source>
</evidence>
<evidence type="ECO:0000269" key="16">
    <source>
    </source>
</evidence>
<evidence type="ECO:0000269" key="17">
    <source>
    </source>
</evidence>
<evidence type="ECO:0000269" key="18">
    <source>
    </source>
</evidence>
<evidence type="ECO:0000269" key="19">
    <source>
    </source>
</evidence>
<evidence type="ECO:0000269" key="20">
    <source>
    </source>
</evidence>
<evidence type="ECO:0000269" key="21">
    <source>
    </source>
</evidence>
<evidence type="ECO:0000269" key="22">
    <source>
    </source>
</evidence>
<evidence type="ECO:0000269" key="23">
    <source>
    </source>
</evidence>
<evidence type="ECO:0000269" key="24">
    <source ref="4"/>
</evidence>
<evidence type="ECO:0000269" key="25">
    <source ref="6"/>
</evidence>
<evidence type="ECO:0000269" key="26">
    <source ref="8"/>
</evidence>
<evidence type="ECO:0000303" key="27">
    <source>
    </source>
</evidence>
<evidence type="ECO:0000303" key="28">
    <source>
    </source>
</evidence>
<evidence type="ECO:0000303" key="29">
    <source ref="4"/>
</evidence>
<evidence type="ECO:0000305" key="30"/>
<evidence type="ECO:0000305" key="31">
    <source>
    </source>
</evidence>
<evidence type="ECO:0000305" key="32">
    <source>
    </source>
</evidence>
<evidence type="ECO:0000312" key="33">
    <source>
        <dbReference type="HGNC" id="HGNC:8004"/>
    </source>
</evidence>
<evidence type="ECO:0007744" key="34">
    <source>
        <dbReference type="PDB" id="2QQM"/>
    </source>
</evidence>
<evidence type="ECO:0007744" key="35">
    <source>
        <dbReference type="PDB" id="7JJC"/>
    </source>
</evidence>
<evidence type="ECO:0007829" key="36">
    <source>
        <dbReference type="PDB" id="1KEX"/>
    </source>
</evidence>
<evidence type="ECO:0007829" key="37">
    <source>
        <dbReference type="PDB" id="2QQI"/>
    </source>
</evidence>
<evidence type="ECO:0007829" key="38">
    <source>
        <dbReference type="PDB" id="2QQM"/>
    </source>
</evidence>
<evidence type="ECO:0007829" key="39">
    <source>
        <dbReference type="PDB" id="4RN5"/>
    </source>
</evidence>
<evidence type="ECO:0007829" key="40">
    <source>
        <dbReference type="PDB" id="5C7G"/>
    </source>
</evidence>
<evidence type="ECO:0007829" key="41">
    <source>
        <dbReference type="PDB" id="5JGI"/>
    </source>
</evidence>
<evidence type="ECO:0007829" key="42">
    <source>
        <dbReference type="PDB" id="5L73"/>
    </source>
</evidence>
<evidence type="ECO:0007829" key="43">
    <source>
        <dbReference type="PDB" id="6FMC"/>
    </source>
</evidence>
<evidence type="ECO:0007829" key="44">
    <source>
        <dbReference type="PDB" id="6TKK"/>
    </source>
</evidence>
<name>NRP1_HUMAN</name>
<organism>
    <name type="scientific">Homo sapiens</name>
    <name type="common">Human</name>
    <dbReference type="NCBI Taxonomy" id="9606"/>
    <lineage>
        <taxon>Eukaryota</taxon>
        <taxon>Metazoa</taxon>
        <taxon>Chordata</taxon>
        <taxon>Craniata</taxon>
        <taxon>Vertebrata</taxon>
        <taxon>Euteleostomi</taxon>
        <taxon>Mammalia</taxon>
        <taxon>Eutheria</taxon>
        <taxon>Euarchontoglires</taxon>
        <taxon>Primates</taxon>
        <taxon>Haplorrhini</taxon>
        <taxon>Catarrhini</taxon>
        <taxon>Hominidae</taxon>
        <taxon>Homo</taxon>
    </lineage>
</organism>